<feature type="chain" id="PRO_0000053486" description="Peroxisome proliferator-activated receptor delta">
    <location>
        <begin position="1"/>
        <end position="441"/>
    </location>
</feature>
<feature type="domain" description="NR LBD" evidence="3">
    <location>
        <begin position="211"/>
        <end position="439"/>
    </location>
</feature>
<feature type="DNA-binding region" description="Nuclear receptor" evidence="2">
    <location>
        <begin position="71"/>
        <end position="145"/>
    </location>
</feature>
<feature type="zinc finger region" description="NR C4-type" evidence="2">
    <location>
        <begin position="74"/>
        <end position="94"/>
    </location>
</feature>
<feature type="zinc finger region" description="NR C4-type" evidence="2">
    <location>
        <begin position="111"/>
        <end position="133"/>
    </location>
</feature>
<feature type="region of interest" description="Disordered" evidence="4">
    <location>
        <begin position="1"/>
        <end position="54"/>
    </location>
</feature>
<feature type="compositionally biased region" description="Acidic residues" evidence="4">
    <location>
        <begin position="1"/>
        <end position="22"/>
    </location>
</feature>
<feature type="compositionally biased region" description="Low complexity" evidence="4">
    <location>
        <begin position="37"/>
        <end position="54"/>
    </location>
</feature>
<feature type="splice variant" id="VSP_043787" description="In isoform 3." evidence="14">
    <original>EQPQEEAPEVREEEEKEEVAEAEGAPELNGGPQHALPSSSYT</original>
    <variation>HQR</variation>
    <location>
        <begin position="2"/>
        <end position="43"/>
    </location>
</feature>
<feature type="splice variant" id="VSP_046104" description="In isoform 4." evidence="14">
    <location>
        <begin position="44"/>
        <end position="141"/>
    </location>
</feature>
<feature type="splice variant" id="VSP_010133" description="In isoform 2." evidence="15">
    <original>DR</original>
    <variation>GE</variation>
    <location>
        <begin position="360"/>
        <end position="361"/>
    </location>
</feature>
<feature type="splice variant" id="VSP_010134" description="In isoform 2." evidence="15">
    <location>
        <begin position="362"/>
        <end position="441"/>
    </location>
</feature>
<feature type="sequence conflict" description="In Ref. 5; BAF84350." evidence="16" ref="5">
    <original>D</original>
    <variation>G</variation>
    <location>
        <position position="79"/>
    </location>
</feature>
<feature type="sequence conflict" description="In Ref. 3; BAH02282." evidence="16" ref="3">
    <original>L</original>
    <variation>P</variation>
    <location>
        <position position="134"/>
    </location>
</feature>
<feature type="sequence conflict" description="In Ref. 5; BAG65615." evidence="16" ref="5">
    <original>N</original>
    <variation>D</variation>
    <location>
        <position position="191"/>
    </location>
</feature>
<feature type="sequence conflict" description="In Ref. 5; BAG65615." evidence="16" ref="5">
    <original>E</original>
    <variation>K</variation>
    <location>
        <position position="217"/>
    </location>
</feature>
<feature type="strand" evidence="20">
    <location>
        <begin position="75"/>
        <end position="77"/>
    </location>
</feature>
<feature type="strand" evidence="20">
    <location>
        <begin position="83"/>
        <end position="85"/>
    </location>
</feature>
<feature type="strand" evidence="20">
    <location>
        <begin position="88"/>
        <end position="90"/>
    </location>
</feature>
<feature type="helix" evidence="20">
    <location>
        <begin position="92"/>
        <end position="103"/>
    </location>
</feature>
<feature type="strand" evidence="20">
    <location>
        <begin position="122"/>
        <end position="124"/>
    </location>
</feature>
<feature type="helix" evidence="20">
    <location>
        <begin position="127"/>
        <end position="136"/>
    </location>
</feature>
<feature type="helix" evidence="19">
    <location>
        <begin position="170"/>
        <end position="174"/>
    </location>
</feature>
<feature type="helix" evidence="24">
    <location>
        <begin position="175"/>
        <end position="189"/>
    </location>
</feature>
<feature type="helix" evidence="24">
    <location>
        <begin position="194"/>
        <end position="201"/>
    </location>
</feature>
<feature type="strand" evidence="23">
    <location>
        <begin position="205"/>
        <end position="207"/>
    </location>
</feature>
<feature type="strand" evidence="24">
    <location>
        <begin position="211"/>
        <end position="213"/>
    </location>
</feature>
<feature type="helix" evidence="24">
    <location>
        <begin position="216"/>
        <end position="225"/>
    </location>
</feature>
<feature type="strand" evidence="18">
    <location>
        <begin position="229"/>
        <end position="231"/>
    </location>
</feature>
<feature type="helix" evidence="24">
    <location>
        <begin position="232"/>
        <end position="234"/>
    </location>
</feature>
<feature type="strand" evidence="21">
    <location>
        <begin position="235"/>
        <end position="238"/>
    </location>
</feature>
<feature type="helix" evidence="24">
    <location>
        <begin position="241"/>
        <end position="265"/>
    </location>
</feature>
<feature type="helix" evidence="24">
    <location>
        <begin position="268"/>
        <end position="271"/>
    </location>
</feature>
<feature type="helix" evidence="24">
    <location>
        <begin position="275"/>
        <end position="294"/>
    </location>
</feature>
<feature type="helix" evidence="24">
    <location>
        <begin position="295"/>
        <end position="297"/>
    </location>
</feature>
<feature type="strand" evidence="24">
    <location>
        <begin position="302"/>
        <end position="305"/>
    </location>
</feature>
<feature type="turn" evidence="24">
    <location>
        <begin position="306"/>
        <end position="309"/>
    </location>
</feature>
<feature type="strand" evidence="24">
    <location>
        <begin position="310"/>
        <end position="313"/>
    </location>
</feature>
<feature type="helix" evidence="24">
    <location>
        <begin position="314"/>
        <end position="318"/>
    </location>
</feature>
<feature type="helix" evidence="24">
    <location>
        <begin position="324"/>
        <end position="339"/>
    </location>
</feature>
<feature type="helix" evidence="24">
    <location>
        <begin position="345"/>
        <end position="356"/>
    </location>
</feature>
<feature type="helix" evidence="24">
    <location>
        <begin position="367"/>
        <end position="388"/>
    </location>
</feature>
<feature type="strand" evidence="25">
    <location>
        <begin position="389"/>
        <end position="391"/>
    </location>
</feature>
<feature type="helix" evidence="24">
    <location>
        <begin position="395"/>
        <end position="423"/>
    </location>
</feature>
<feature type="turn" evidence="22">
    <location>
        <begin position="424"/>
        <end position="426"/>
    </location>
</feature>
<feature type="helix" evidence="24">
    <location>
        <begin position="431"/>
        <end position="437"/>
    </location>
</feature>
<dbReference type="EMBL" id="L07592">
    <property type="protein sequence ID" value="AAA36469.1"/>
    <property type="molecule type" value="mRNA"/>
</dbReference>
<dbReference type="EMBL" id="AF246303">
    <property type="protein sequence ID" value="AAF62553.1"/>
    <property type="molecule type" value="Genomic_DNA"/>
</dbReference>
<dbReference type="EMBL" id="AF246299">
    <property type="protein sequence ID" value="AAF62553.1"/>
    <property type="status" value="JOINED"/>
    <property type="molecule type" value="Genomic_DNA"/>
</dbReference>
<dbReference type="EMBL" id="AF246300">
    <property type="protein sequence ID" value="AAF62553.1"/>
    <property type="status" value="JOINED"/>
    <property type="molecule type" value="Genomic_DNA"/>
</dbReference>
<dbReference type="EMBL" id="AF246301">
    <property type="protein sequence ID" value="AAF62553.1"/>
    <property type="status" value="JOINED"/>
    <property type="molecule type" value="Genomic_DNA"/>
</dbReference>
<dbReference type="EMBL" id="AF246302">
    <property type="protein sequence ID" value="AAF62553.1"/>
    <property type="status" value="JOINED"/>
    <property type="molecule type" value="Genomic_DNA"/>
</dbReference>
<dbReference type="EMBL" id="AB307691">
    <property type="protein sequence ID" value="BAH02282.1"/>
    <property type="molecule type" value="mRNA"/>
</dbReference>
<dbReference type="EMBL" id="AY919140">
    <property type="protein sequence ID" value="AAX14041.1"/>
    <property type="molecule type" value="mRNA"/>
</dbReference>
<dbReference type="EMBL" id="AK291661">
    <property type="protein sequence ID" value="BAF84350.1"/>
    <property type="molecule type" value="mRNA"/>
</dbReference>
<dbReference type="EMBL" id="AK296425">
    <property type="protein sequence ID" value="BAH12347.1"/>
    <property type="molecule type" value="mRNA"/>
</dbReference>
<dbReference type="EMBL" id="AK304878">
    <property type="protein sequence ID" value="BAG65615.1"/>
    <property type="molecule type" value="mRNA"/>
</dbReference>
<dbReference type="EMBL" id="AK122614">
    <property type="protein sequence ID" value="BAG53624.1"/>
    <property type="molecule type" value="mRNA"/>
</dbReference>
<dbReference type="EMBL" id="AY442342">
    <property type="protein sequence ID" value="AAR05439.1"/>
    <property type="molecule type" value="Genomic_DNA"/>
</dbReference>
<dbReference type="EMBL" id="AL022721">
    <property type="status" value="NOT_ANNOTATED_CDS"/>
    <property type="molecule type" value="Genomic_DNA"/>
</dbReference>
<dbReference type="EMBL" id="CH471081">
    <property type="protein sequence ID" value="EAX03825.1"/>
    <property type="molecule type" value="Genomic_DNA"/>
</dbReference>
<dbReference type="EMBL" id="BC002715">
    <property type="protein sequence ID" value="AAH02715.1"/>
    <property type="molecule type" value="mRNA"/>
</dbReference>
<dbReference type="EMBL" id="BC007578">
    <property type="protein sequence ID" value="AAH07578.1"/>
    <property type="molecule type" value="mRNA"/>
</dbReference>
<dbReference type="EMBL" id="AB099507">
    <property type="protein sequence ID" value="BAC78903.1"/>
    <property type="molecule type" value="mRNA"/>
</dbReference>
<dbReference type="CCDS" id="CCDS4803.1">
    <molecule id="Q03181-1"/>
</dbReference>
<dbReference type="CCDS" id="CCDS4804.1">
    <molecule id="Q03181-2"/>
</dbReference>
<dbReference type="CCDS" id="CCDS54994.1">
    <molecule id="Q03181-3"/>
</dbReference>
<dbReference type="CCDS" id="CCDS54995.1">
    <molecule id="Q03181-4"/>
</dbReference>
<dbReference type="PIR" id="A45360">
    <property type="entry name" value="A45360"/>
</dbReference>
<dbReference type="RefSeq" id="NP_001165289.1">
    <molecule id="Q03181-1"/>
    <property type="nucleotide sequence ID" value="NM_001171818.2"/>
</dbReference>
<dbReference type="RefSeq" id="NP_001165290.1">
    <molecule id="Q03181-3"/>
    <property type="nucleotide sequence ID" value="NM_001171819.2"/>
</dbReference>
<dbReference type="RefSeq" id="NP_001165291.1">
    <molecule id="Q03181-4"/>
    <property type="nucleotide sequence ID" value="NM_001171820.2"/>
</dbReference>
<dbReference type="RefSeq" id="NP_006229.1">
    <molecule id="Q03181-1"/>
    <property type="nucleotide sequence ID" value="NM_006238.5"/>
</dbReference>
<dbReference type="RefSeq" id="NP_803184.1">
    <molecule id="Q03181-2"/>
    <property type="nucleotide sequence ID" value="NM_177435.3"/>
</dbReference>
<dbReference type="RefSeq" id="XP_005249250.1">
    <molecule id="Q03181-1"/>
    <property type="nucleotide sequence ID" value="XM_005249193.2"/>
</dbReference>
<dbReference type="RefSeq" id="XP_006715183.1">
    <property type="nucleotide sequence ID" value="XM_006715120.1"/>
</dbReference>
<dbReference type="RefSeq" id="XP_006715186.1">
    <molecule id="Q03181-1"/>
    <property type="nucleotide sequence ID" value="XM_006715123.2"/>
</dbReference>
<dbReference type="RefSeq" id="XP_011513009.1">
    <molecule id="Q03181-1"/>
    <property type="nucleotide sequence ID" value="XM_011514707.2"/>
</dbReference>
<dbReference type="RefSeq" id="XP_011513011.1">
    <property type="nucleotide sequence ID" value="XM_011514709.1"/>
</dbReference>
<dbReference type="RefSeq" id="XP_011513012.1">
    <molecule id="Q03181-1"/>
    <property type="nucleotide sequence ID" value="XM_011514710.2"/>
</dbReference>
<dbReference type="RefSeq" id="XP_016866460.1">
    <property type="nucleotide sequence ID" value="XM_017010971.1"/>
</dbReference>
<dbReference type="RefSeq" id="XP_016866461.1">
    <property type="nucleotide sequence ID" value="XM_017010972.1"/>
</dbReference>
<dbReference type="RefSeq" id="XP_016866462.1">
    <molecule id="Q03181-1"/>
    <property type="nucleotide sequence ID" value="XM_017010973.2"/>
</dbReference>
<dbReference type="RefSeq" id="XP_016866463.1">
    <molecule id="Q03181-1"/>
    <property type="nucleotide sequence ID" value="XM_017010974.2"/>
</dbReference>
<dbReference type="RefSeq" id="XP_047274871.1">
    <molecule id="Q03181-1"/>
    <property type="nucleotide sequence ID" value="XM_047418915.1"/>
</dbReference>
<dbReference type="RefSeq" id="XP_047274872.1">
    <molecule id="Q03181-1"/>
    <property type="nucleotide sequence ID" value="XM_047418916.1"/>
</dbReference>
<dbReference type="RefSeq" id="XP_047274873.1">
    <molecule id="Q03181-1"/>
    <property type="nucleotide sequence ID" value="XM_047418917.1"/>
</dbReference>
<dbReference type="RefSeq" id="XP_047274874.1">
    <molecule id="Q03181-1"/>
    <property type="nucleotide sequence ID" value="XM_047418918.1"/>
</dbReference>
<dbReference type="RefSeq" id="XP_047274875.1">
    <molecule id="Q03181-1"/>
    <property type="nucleotide sequence ID" value="XM_047418919.1"/>
</dbReference>
<dbReference type="RefSeq" id="XP_047274876.1">
    <molecule id="Q03181-1"/>
    <property type="nucleotide sequence ID" value="XM_047418920.1"/>
</dbReference>
<dbReference type="RefSeq" id="XP_047274877.1">
    <molecule id="Q03181-1"/>
    <property type="nucleotide sequence ID" value="XM_047418921.1"/>
</dbReference>
<dbReference type="RefSeq" id="XP_047274878.1">
    <molecule id="Q03181-1"/>
    <property type="nucleotide sequence ID" value="XM_047418922.1"/>
</dbReference>
<dbReference type="RefSeq" id="XP_047274879.1">
    <molecule id="Q03181-1"/>
    <property type="nucleotide sequence ID" value="XM_047418923.1"/>
</dbReference>
<dbReference type="RefSeq" id="XP_047274880.1">
    <molecule id="Q03181-1"/>
    <property type="nucleotide sequence ID" value="XM_047418924.1"/>
</dbReference>
<dbReference type="RefSeq" id="XP_047274881.1">
    <molecule id="Q03181-1"/>
    <property type="nucleotide sequence ID" value="XM_047418925.1"/>
</dbReference>
<dbReference type="RefSeq" id="XP_047274882.1">
    <molecule id="Q03181-1"/>
    <property type="nucleotide sequence ID" value="XM_047418926.1"/>
</dbReference>
<dbReference type="RefSeq" id="XP_047274883.1">
    <molecule id="Q03181-1"/>
    <property type="nucleotide sequence ID" value="XM_047418927.1"/>
</dbReference>
<dbReference type="RefSeq" id="XP_047274884.1">
    <molecule id="Q03181-1"/>
    <property type="nucleotide sequence ID" value="XM_047418928.1"/>
</dbReference>
<dbReference type="RefSeq" id="XP_047274885.1">
    <molecule id="Q03181-1"/>
    <property type="nucleotide sequence ID" value="XM_047418929.1"/>
</dbReference>
<dbReference type="RefSeq" id="XP_047274886.1">
    <molecule id="Q03181-1"/>
    <property type="nucleotide sequence ID" value="XM_047418930.1"/>
</dbReference>
<dbReference type="RefSeq" id="XP_047274887.1">
    <molecule id="Q03181-1"/>
    <property type="nucleotide sequence ID" value="XM_047418931.1"/>
</dbReference>
<dbReference type="RefSeq" id="XP_054211676.1">
    <molecule id="Q03181-1"/>
    <property type="nucleotide sequence ID" value="XM_054355701.1"/>
</dbReference>
<dbReference type="RefSeq" id="XP_054211677.1">
    <molecule id="Q03181-1"/>
    <property type="nucleotide sequence ID" value="XM_054355702.1"/>
</dbReference>
<dbReference type="RefSeq" id="XP_054211678.1">
    <molecule id="Q03181-1"/>
    <property type="nucleotide sequence ID" value="XM_054355703.1"/>
</dbReference>
<dbReference type="RefSeq" id="XP_054211679.1">
    <molecule id="Q03181-1"/>
    <property type="nucleotide sequence ID" value="XM_054355704.1"/>
</dbReference>
<dbReference type="RefSeq" id="XP_054211680.1">
    <molecule id="Q03181-1"/>
    <property type="nucleotide sequence ID" value="XM_054355705.1"/>
</dbReference>
<dbReference type="RefSeq" id="XP_054211681.1">
    <molecule id="Q03181-1"/>
    <property type="nucleotide sequence ID" value="XM_054355706.1"/>
</dbReference>
<dbReference type="RefSeq" id="XP_054211682.1">
    <molecule id="Q03181-1"/>
    <property type="nucleotide sequence ID" value="XM_054355707.1"/>
</dbReference>
<dbReference type="RefSeq" id="XP_054211683.1">
    <molecule id="Q03181-1"/>
    <property type="nucleotide sequence ID" value="XM_054355708.1"/>
</dbReference>
<dbReference type="RefSeq" id="XP_054211684.1">
    <molecule id="Q03181-1"/>
    <property type="nucleotide sequence ID" value="XM_054355709.1"/>
</dbReference>
<dbReference type="RefSeq" id="XP_054211685.1">
    <molecule id="Q03181-1"/>
    <property type="nucleotide sequence ID" value="XM_054355710.1"/>
</dbReference>
<dbReference type="RefSeq" id="XP_054211686.1">
    <molecule id="Q03181-1"/>
    <property type="nucleotide sequence ID" value="XM_054355711.1"/>
</dbReference>
<dbReference type="RefSeq" id="XP_054211687.1">
    <molecule id="Q03181-1"/>
    <property type="nucleotide sequence ID" value="XM_054355712.1"/>
</dbReference>
<dbReference type="RefSeq" id="XP_054211688.1">
    <molecule id="Q03181-1"/>
    <property type="nucleotide sequence ID" value="XM_054355713.1"/>
</dbReference>
<dbReference type="RefSeq" id="XP_054211689.1">
    <molecule id="Q03181-1"/>
    <property type="nucleotide sequence ID" value="XM_054355714.1"/>
</dbReference>
<dbReference type="RefSeq" id="XP_054211690.1">
    <molecule id="Q03181-1"/>
    <property type="nucleotide sequence ID" value="XM_054355715.1"/>
</dbReference>
<dbReference type="RefSeq" id="XP_054211691.1">
    <molecule id="Q03181-1"/>
    <property type="nucleotide sequence ID" value="XM_054355716.1"/>
</dbReference>
<dbReference type="RefSeq" id="XP_054211692.1">
    <molecule id="Q03181-1"/>
    <property type="nucleotide sequence ID" value="XM_054355717.1"/>
</dbReference>
<dbReference type="RefSeq" id="XP_054211693.1">
    <molecule id="Q03181-1"/>
    <property type="nucleotide sequence ID" value="XM_054355718.1"/>
</dbReference>
<dbReference type="RefSeq" id="XP_054211694.1">
    <molecule id="Q03181-1"/>
    <property type="nucleotide sequence ID" value="XM_054355719.1"/>
</dbReference>
<dbReference type="RefSeq" id="XP_054211695.1">
    <molecule id="Q03181-1"/>
    <property type="nucleotide sequence ID" value="XM_054355720.1"/>
</dbReference>
<dbReference type="RefSeq" id="XP_054211696.1">
    <molecule id="Q03181-1"/>
    <property type="nucleotide sequence ID" value="XM_054355721.1"/>
</dbReference>
<dbReference type="PDB" id="1GWX">
    <property type="method" value="X-ray"/>
    <property type="resolution" value="2.50 A"/>
    <property type="chains" value="A/B=171-441"/>
</dbReference>
<dbReference type="PDB" id="1Y0S">
    <property type="method" value="X-ray"/>
    <property type="resolution" value="2.65 A"/>
    <property type="chains" value="A/B=170-441"/>
</dbReference>
<dbReference type="PDB" id="2AWH">
    <property type="method" value="X-ray"/>
    <property type="resolution" value="2.00 A"/>
    <property type="chains" value="A/B=174-441"/>
</dbReference>
<dbReference type="PDB" id="2B50">
    <property type="method" value="X-ray"/>
    <property type="resolution" value="2.00 A"/>
    <property type="chains" value="A/B=169-440"/>
</dbReference>
<dbReference type="PDB" id="2BAW">
    <property type="method" value="X-ray"/>
    <property type="resolution" value="2.30 A"/>
    <property type="chains" value="A/B=175-441"/>
</dbReference>
<dbReference type="PDB" id="2ENV">
    <property type="method" value="NMR"/>
    <property type="chains" value="A=72-146"/>
</dbReference>
<dbReference type="PDB" id="2GWX">
    <property type="method" value="X-ray"/>
    <property type="resolution" value="2.30 A"/>
    <property type="chains" value="A/B=175-441"/>
</dbReference>
<dbReference type="PDB" id="2J14">
    <property type="method" value="X-ray"/>
    <property type="resolution" value="2.80 A"/>
    <property type="chains" value="A/B=165-441"/>
</dbReference>
<dbReference type="PDB" id="2Q5G">
    <property type="method" value="X-ray"/>
    <property type="resolution" value="2.70 A"/>
    <property type="chains" value="A/B=165-441"/>
</dbReference>
<dbReference type="PDB" id="2XYJ">
    <property type="method" value="X-ray"/>
    <property type="resolution" value="2.30 A"/>
    <property type="chains" value="A/B=165-441"/>
</dbReference>
<dbReference type="PDB" id="2XYW">
    <property type="method" value="X-ray"/>
    <property type="resolution" value="3.14 A"/>
    <property type="chains" value="A/B=165-441"/>
</dbReference>
<dbReference type="PDB" id="2XYX">
    <property type="method" value="X-ray"/>
    <property type="resolution" value="2.70 A"/>
    <property type="chains" value="A/B=165-441"/>
</dbReference>
<dbReference type="PDB" id="2ZNP">
    <property type="method" value="X-ray"/>
    <property type="resolution" value="3.00 A"/>
    <property type="chains" value="A/B=170-441"/>
</dbReference>
<dbReference type="PDB" id="2ZNQ">
    <property type="method" value="X-ray"/>
    <property type="resolution" value="2.65 A"/>
    <property type="chains" value="A/B=170-441"/>
</dbReference>
<dbReference type="PDB" id="3D5F">
    <property type="method" value="X-ray"/>
    <property type="resolution" value="2.20 A"/>
    <property type="chains" value="A/B=175-441"/>
</dbReference>
<dbReference type="PDB" id="3DY6">
    <property type="method" value="X-ray"/>
    <property type="resolution" value="2.90 A"/>
    <property type="chains" value="A/B=171-441"/>
</dbReference>
<dbReference type="PDB" id="3ET2">
    <property type="method" value="X-ray"/>
    <property type="resolution" value="2.24 A"/>
    <property type="chains" value="A/B=165-441"/>
</dbReference>
<dbReference type="PDB" id="3GWX">
    <property type="method" value="X-ray"/>
    <property type="resolution" value="2.40 A"/>
    <property type="chains" value="A/B=171-441"/>
</dbReference>
<dbReference type="PDB" id="3GZ9">
    <property type="method" value="X-ray"/>
    <property type="resolution" value="2.00 A"/>
    <property type="chains" value="A=171-439"/>
</dbReference>
<dbReference type="PDB" id="3OZ0">
    <property type="method" value="X-ray"/>
    <property type="resolution" value="3.00 A"/>
    <property type="chains" value="A=165-441"/>
</dbReference>
<dbReference type="PDB" id="3PEQ">
    <property type="method" value="X-ray"/>
    <property type="resolution" value="2.40 A"/>
    <property type="chains" value="A/B=171-441"/>
</dbReference>
<dbReference type="PDB" id="3SP9">
    <property type="method" value="X-ray"/>
    <property type="resolution" value="2.30 A"/>
    <property type="chains" value="A/B=173-441"/>
</dbReference>
<dbReference type="PDB" id="3TKM">
    <property type="method" value="X-ray"/>
    <property type="resolution" value="1.95 A"/>
    <property type="chains" value="A=171-441"/>
</dbReference>
<dbReference type="PDB" id="5U3Q">
    <property type="method" value="X-ray"/>
    <property type="resolution" value="1.50 A"/>
    <property type="chains" value="A/B=170-441"/>
</dbReference>
<dbReference type="PDB" id="5U3R">
    <property type="method" value="X-ray"/>
    <property type="resolution" value="1.95 A"/>
    <property type="chains" value="A/B=170-441"/>
</dbReference>
<dbReference type="PDB" id="5U3S">
    <property type="method" value="X-ray"/>
    <property type="resolution" value="2.00 A"/>
    <property type="chains" value="A/B=170-441"/>
</dbReference>
<dbReference type="PDB" id="5U3T">
    <property type="method" value="X-ray"/>
    <property type="resolution" value="1.70 A"/>
    <property type="chains" value="A/B=170-441"/>
</dbReference>
<dbReference type="PDB" id="5U3U">
    <property type="method" value="X-ray"/>
    <property type="resolution" value="2.10 A"/>
    <property type="chains" value="A/B=170-441"/>
</dbReference>
<dbReference type="PDB" id="5U3V">
    <property type="method" value="X-ray"/>
    <property type="resolution" value="1.84 A"/>
    <property type="chains" value="A/B=170-441"/>
</dbReference>
<dbReference type="PDB" id="5U3W">
    <property type="method" value="X-ray"/>
    <property type="resolution" value="1.80 A"/>
    <property type="chains" value="A/B=170-441"/>
</dbReference>
<dbReference type="PDB" id="5U3X">
    <property type="method" value="X-ray"/>
    <property type="resolution" value="2.10 A"/>
    <property type="chains" value="A/B=170-441"/>
</dbReference>
<dbReference type="PDB" id="5U3Y">
    <property type="method" value="X-ray"/>
    <property type="resolution" value="1.90 A"/>
    <property type="chains" value="A/B=170-441"/>
</dbReference>
<dbReference type="PDB" id="5U3Z">
    <property type="method" value="X-ray"/>
    <property type="resolution" value="1.72 A"/>
    <property type="chains" value="A/B=170-441"/>
</dbReference>
<dbReference type="PDB" id="5U40">
    <property type="method" value="X-ray"/>
    <property type="resolution" value="2.00 A"/>
    <property type="chains" value="A/B=170-441"/>
</dbReference>
<dbReference type="PDB" id="5U41">
    <property type="method" value="X-ray"/>
    <property type="resolution" value="1.90 A"/>
    <property type="chains" value="A/B=170-441"/>
</dbReference>
<dbReference type="PDB" id="5U42">
    <property type="method" value="X-ray"/>
    <property type="resolution" value="1.70 A"/>
    <property type="chains" value="A/B=170-441"/>
</dbReference>
<dbReference type="PDB" id="5U43">
    <property type="method" value="X-ray"/>
    <property type="resolution" value="1.90 A"/>
    <property type="chains" value="A/B=170-441"/>
</dbReference>
<dbReference type="PDB" id="5U44">
    <property type="method" value="X-ray"/>
    <property type="resolution" value="2.15 A"/>
    <property type="chains" value="A/B=170-441"/>
</dbReference>
<dbReference type="PDB" id="5U45">
    <property type="method" value="X-ray"/>
    <property type="resolution" value="1.95 A"/>
    <property type="chains" value="A/B=170-441"/>
</dbReference>
<dbReference type="PDB" id="5U46">
    <property type="method" value="X-ray"/>
    <property type="resolution" value="2.00 A"/>
    <property type="chains" value="A/B=170-441"/>
</dbReference>
<dbReference type="PDB" id="5XMX">
    <property type="method" value="X-ray"/>
    <property type="resolution" value="2.00 A"/>
    <property type="chains" value="A/B=171-441"/>
</dbReference>
<dbReference type="PDB" id="5Y7X">
    <property type="method" value="X-ray"/>
    <property type="resolution" value="1.70 A"/>
    <property type="chains" value="A/B=171-441"/>
</dbReference>
<dbReference type="PDB" id="5ZXI">
    <property type="method" value="X-ray"/>
    <property type="resolution" value="2.10 A"/>
    <property type="chains" value="A/B=171-441"/>
</dbReference>
<dbReference type="PDB" id="6A6P">
    <property type="method" value="X-ray"/>
    <property type="resolution" value="2.10 A"/>
    <property type="chains" value="A/B=171-440"/>
</dbReference>
<dbReference type="PDB" id="7F80">
    <property type="method" value="X-ray"/>
    <property type="resolution" value="2.80 A"/>
    <property type="chains" value="A/B=171-441"/>
</dbReference>
<dbReference type="PDB" id="7VWE">
    <property type="method" value="X-ray"/>
    <property type="resolution" value="3.00 A"/>
    <property type="chains" value="A/B=170-441"/>
</dbReference>
<dbReference type="PDB" id="7VWF">
    <property type="method" value="X-ray"/>
    <property type="resolution" value="1.90 A"/>
    <property type="chains" value="A/B=170-441"/>
</dbReference>
<dbReference type="PDB" id="7VWG">
    <property type="method" value="X-ray"/>
    <property type="resolution" value="2.20 A"/>
    <property type="chains" value="A/B=170-441"/>
</dbReference>
<dbReference type="PDB" id="7VWH">
    <property type="method" value="X-ray"/>
    <property type="resolution" value="2.10 A"/>
    <property type="chains" value="A/B=170-441"/>
</dbReference>
<dbReference type="PDB" id="7W0G">
    <property type="method" value="X-ray"/>
    <property type="resolution" value="2.44 A"/>
    <property type="chains" value="A/B=173-441"/>
</dbReference>
<dbReference type="PDB" id="7WGL">
    <property type="method" value="X-ray"/>
    <property type="resolution" value="2.09 A"/>
    <property type="chains" value="A/B=170-441"/>
</dbReference>
<dbReference type="PDB" id="7WGN">
    <property type="method" value="X-ray"/>
    <property type="resolution" value="1.81 A"/>
    <property type="chains" value="A=170-441"/>
</dbReference>
<dbReference type="PDB" id="8HF8">
    <property type="method" value="X-ray"/>
    <property type="resolution" value="2.11 A"/>
    <property type="chains" value="A/B=173-441"/>
</dbReference>
<dbReference type="PDB" id="8HUL">
    <property type="method" value="X-ray"/>
    <property type="resolution" value="2.46 A"/>
    <property type="chains" value="A/B=170-441"/>
</dbReference>
<dbReference type="PDB" id="8HUO">
    <property type="method" value="X-ray"/>
    <property type="resolution" value="2.67 A"/>
    <property type="chains" value="A/B=170-441"/>
</dbReference>
<dbReference type="PDBsum" id="1GWX"/>
<dbReference type="PDBsum" id="1Y0S"/>
<dbReference type="PDBsum" id="2AWH"/>
<dbReference type="PDBsum" id="2B50"/>
<dbReference type="PDBsum" id="2BAW"/>
<dbReference type="PDBsum" id="2ENV"/>
<dbReference type="PDBsum" id="2GWX"/>
<dbReference type="PDBsum" id="2J14"/>
<dbReference type="PDBsum" id="2Q5G"/>
<dbReference type="PDBsum" id="2XYJ"/>
<dbReference type="PDBsum" id="2XYW"/>
<dbReference type="PDBsum" id="2XYX"/>
<dbReference type="PDBsum" id="2ZNP"/>
<dbReference type="PDBsum" id="2ZNQ"/>
<dbReference type="PDBsum" id="3D5F"/>
<dbReference type="PDBsum" id="3DY6"/>
<dbReference type="PDBsum" id="3ET2"/>
<dbReference type="PDBsum" id="3GWX"/>
<dbReference type="PDBsum" id="3GZ9"/>
<dbReference type="PDBsum" id="3OZ0"/>
<dbReference type="PDBsum" id="3PEQ"/>
<dbReference type="PDBsum" id="3SP9"/>
<dbReference type="PDBsum" id="3TKM"/>
<dbReference type="PDBsum" id="5U3Q"/>
<dbReference type="PDBsum" id="5U3R"/>
<dbReference type="PDBsum" id="5U3S"/>
<dbReference type="PDBsum" id="5U3T"/>
<dbReference type="PDBsum" id="5U3U"/>
<dbReference type="PDBsum" id="5U3V"/>
<dbReference type="PDBsum" id="5U3W"/>
<dbReference type="PDBsum" id="5U3X"/>
<dbReference type="PDBsum" id="5U3Y"/>
<dbReference type="PDBsum" id="5U3Z"/>
<dbReference type="PDBsum" id="5U40"/>
<dbReference type="PDBsum" id="5U41"/>
<dbReference type="PDBsum" id="5U42"/>
<dbReference type="PDBsum" id="5U43"/>
<dbReference type="PDBsum" id="5U44"/>
<dbReference type="PDBsum" id="5U45"/>
<dbReference type="PDBsum" id="5U46"/>
<dbReference type="PDBsum" id="5XMX"/>
<dbReference type="PDBsum" id="5Y7X"/>
<dbReference type="PDBsum" id="5ZXI"/>
<dbReference type="PDBsum" id="6A6P"/>
<dbReference type="PDBsum" id="7F80"/>
<dbReference type="PDBsum" id="7VWE"/>
<dbReference type="PDBsum" id="7VWF"/>
<dbReference type="PDBsum" id="7VWG"/>
<dbReference type="PDBsum" id="7VWH"/>
<dbReference type="PDBsum" id="7W0G"/>
<dbReference type="PDBsum" id="7WGL"/>
<dbReference type="PDBsum" id="7WGN"/>
<dbReference type="PDBsum" id="8HF8"/>
<dbReference type="PDBsum" id="8HUL"/>
<dbReference type="PDBsum" id="8HUO"/>
<dbReference type="SMR" id="Q03181"/>
<dbReference type="BioGRID" id="111463">
    <property type="interactions" value="129"/>
</dbReference>
<dbReference type="CORUM" id="Q03181"/>
<dbReference type="FunCoup" id="Q03181">
    <property type="interactions" value="1757"/>
</dbReference>
<dbReference type="IntAct" id="Q03181">
    <property type="interactions" value="81"/>
</dbReference>
<dbReference type="MINT" id="Q03181"/>
<dbReference type="STRING" id="9606.ENSP00000310928"/>
<dbReference type="BindingDB" id="Q03181"/>
<dbReference type="ChEMBL" id="CHEMBL3979"/>
<dbReference type="DrugBank" id="DB07070">
    <property type="generic name" value="(2S)-2-{3-[({[2-fluoro-4-(trifluoromethyl)phenyl]carbonyl}amino)methyl]-4-methoxybenzyl}butanoic acid"/>
</dbReference>
<dbReference type="DrugBank" id="DB07691">
    <property type="generic name" value="2-({[3-(3,4-dihydroisoquinolin-2(1H)-ylsulfonyl)phenyl]carbonyl}amino)benzoic acid"/>
</dbReference>
<dbReference type="DrugBank" id="DB00132">
    <property type="generic name" value="alpha-Linolenic acid"/>
</dbReference>
<dbReference type="DrugBank" id="DB01393">
    <property type="generic name" value="Bezafibrate"/>
</dbReference>
<dbReference type="DrugBank" id="DB05416">
    <property type="generic name" value="Cardarine"/>
</dbReference>
<dbReference type="DrugBank" id="DB04801">
    <property type="generic name" value="cis-Vaccenic acid"/>
</dbReference>
<dbReference type="DrugBank" id="DB09006">
    <property type="generic name" value="Clinofibrate"/>
</dbReference>
<dbReference type="DrugBank" id="DB05187">
    <property type="generic name" value="Elafibranor"/>
</dbReference>
<dbReference type="DrugBank" id="DB13873">
    <property type="generic name" value="Fenofibric acid"/>
</dbReference>
<dbReference type="DrugBank" id="DB13961">
    <property type="generic name" value="Fish oil"/>
</dbReference>
<dbReference type="DrugBank" id="DB09462">
    <property type="generic name" value="Glycerin"/>
</dbReference>
<dbReference type="DrugBank" id="DB03338">
    <property type="generic name" value="Heptyl glucoside"/>
</dbReference>
<dbReference type="DrugBank" id="DB00159">
    <property type="generic name" value="Icosapent"/>
</dbReference>
<dbReference type="DrugBank" id="DB07724">
    <property type="generic name" value="Indeglitazar"/>
</dbReference>
<dbReference type="DrugBank" id="DB05188">
    <property type="generic name" value="KD3010"/>
</dbReference>
<dbReference type="DrugBank" id="DB14801">
    <property type="generic name" value="Lanifibranor"/>
</dbReference>
<dbReference type="DrugBank" id="DB04224">
    <property type="generic name" value="Oleic Acid"/>
</dbReference>
<dbReference type="DrugBank" id="DB02746">
    <property type="generic name" value="Phthalic Acid"/>
</dbReference>
<dbReference type="DrugBank" id="DB00412">
    <property type="generic name" value="Rosiglitazone"/>
</dbReference>
<dbReference type="DrugBank" id="DB12390">
    <property type="generic name" value="Seladelpar"/>
</dbReference>
<dbReference type="DrugBank" id="DB16332">
    <property type="generic name" value="Sodelglitazar"/>
</dbReference>
<dbReference type="DrugBank" id="DB00605">
    <property type="generic name" value="Sulindac"/>
</dbReference>
<dbReference type="DrugBank" id="DB00374">
    <property type="generic name" value="Treprostinil"/>
</dbReference>
<dbReference type="DrugBank" id="DB00197">
    <property type="generic name" value="Troglitazone"/>
</dbReference>
<dbReference type="DrugBank" id="DB00313">
    <property type="generic name" value="Valproic acid"/>
</dbReference>
<dbReference type="DrugBank" id="DB08078">
    <property type="generic name" value="{4-[3-(4-acetyl-3-hydroxy-2-propylphenoxy)propoxy]phenoxy}acetic acid"/>
</dbReference>
<dbReference type="DrugCentral" id="Q03181"/>
<dbReference type="GuidetoPHARMACOLOGY" id="594"/>
<dbReference type="SwissLipids" id="SLP:000001645"/>
<dbReference type="GlyGen" id="Q03181">
    <property type="glycosylation" value="1 site"/>
</dbReference>
<dbReference type="iPTMnet" id="Q03181"/>
<dbReference type="PhosphoSitePlus" id="Q03181"/>
<dbReference type="BioMuta" id="PPARD"/>
<dbReference type="DMDM" id="417522"/>
<dbReference type="jPOST" id="Q03181"/>
<dbReference type="MassIVE" id="Q03181"/>
<dbReference type="PaxDb" id="9606-ENSP00000310928"/>
<dbReference type="PeptideAtlas" id="Q03181"/>
<dbReference type="ProteomicsDB" id="19792"/>
<dbReference type="ProteomicsDB" id="58200">
    <molecule id="Q03181-1"/>
</dbReference>
<dbReference type="ProteomicsDB" id="58201">
    <molecule id="Q03181-2"/>
</dbReference>
<dbReference type="ProteomicsDB" id="58202">
    <molecule id="Q03181-3"/>
</dbReference>
<dbReference type="Antibodypedia" id="4322">
    <property type="antibodies" value="635 antibodies from 42 providers"/>
</dbReference>
<dbReference type="DNASU" id="5467"/>
<dbReference type="Ensembl" id="ENST00000311565.4">
    <molecule id="Q03181-1"/>
    <property type="protein sequence ID" value="ENSP00000310928.4"/>
    <property type="gene ID" value="ENSG00000112033.14"/>
</dbReference>
<dbReference type="Ensembl" id="ENST00000337400.6">
    <molecule id="Q03181-2"/>
    <property type="protein sequence ID" value="ENSP00000337063.2"/>
    <property type="gene ID" value="ENSG00000112033.14"/>
</dbReference>
<dbReference type="Ensembl" id="ENST00000360694.8">
    <molecule id="Q03181-1"/>
    <property type="protein sequence ID" value="ENSP00000353916.3"/>
    <property type="gene ID" value="ENSG00000112033.14"/>
</dbReference>
<dbReference type="Ensembl" id="ENST00000418635.6">
    <molecule id="Q03181-4"/>
    <property type="protein sequence ID" value="ENSP00000413314.2"/>
    <property type="gene ID" value="ENSG00000112033.14"/>
</dbReference>
<dbReference type="Ensembl" id="ENST00000448077.6">
    <molecule id="Q03181-3"/>
    <property type="protein sequence ID" value="ENSP00000414372.2"/>
    <property type="gene ID" value="ENSG00000112033.14"/>
</dbReference>
<dbReference type="GeneID" id="5467"/>
<dbReference type="KEGG" id="hsa:5467"/>
<dbReference type="MANE-Select" id="ENST00000360694.8">
    <property type="protein sequence ID" value="ENSP00000353916.3"/>
    <property type="RefSeq nucleotide sequence ID" value="NM_006238.5"/>
    <property type="RefSeq protein sequence ID" value="NP_006229.1"/>
</dbReference>
<dbReference type="UCSC" id="uc003okm.3">
    <molecule id="Q03181-1"/>
    <property type="organism name" value="human"/>
</dbReference>
<dbReference type="AGR" id="HGNC:9235"/>
<dbReference type="CTD" id="5467"/>
<dbReference type="DisGeNET" id="5467"/>
<dbReference type="GeneCards" id="PPARD"/>
<dbReference type="HGNC" id="HGNC:9235">
    <property type="gene designation" value="PPARD"/>
</dbReference>
<dbReference type="HPA" id="ENSG00000112033">
    <property type="expression patterns" value="Low tissue specificity"/>
</dbReference>
<dbReference type="MalaCards" id="PPARD"/>
<dbReference type="MIM" id="600409">
    <property type="type" value="gene"/>
</dbReference>
<dbReference type="neXtProt" id="NX_Q03181"/>
<dbReference type="OpenTargets" id="ENSG00000112033"/>
<dbReference type="PharmGKB" id="PA33557"/>
<dbReference type="VEuPathDB" id="HostDB:ENSG00000112033"/>
<dbReference type="eggNOG" id="KOG3575">
    <property type="taxonomic scope" value="Eukaryota"/>
</dbReference>
<dbReference type="GeneTree" id="ENSGT00940000156676"/>
<dbReference type="HOGENOM" id="CLU_007368_4_0_1"/>
<dbReference type="InParanoid" id="Q03181"/>
<dbReference type="OMA" id="YEKCDRS"/>
<dbReference type="OrthoDB" id="7634782at2759"/>
<dbReference type="PAN-GO" id="Q03181">
    <property type="GO annotations" value="12 GO annotations based on evolutionary models"/>
</dbReference>
<dbReference type="PhylomeDB" id="Q03181"/>
<dbReference type="TreeFam" id="TF316304"/>
<dbReference type="PathwayCommons" id="Q03181"/>
<dbReference type="Reactome" id="R-HSA-200425">
    <property type="pathway name" value="Carnitine shuttle"/>
</dbReference>
<dbReference type="Reactome" id="R-HSA-383280">
    <property type="pathway name" value="Nuclear Receptor transcription pathway"/>
</dbReference>
<dbReference type="Reactome" id="R-HSA-5362517">
    <property type="pathway name" value="Signaling by Retinoic Acid"/>
</dbReference>
<dbReference type="SignaLink" id="Q03181"/>
<dbReference type="SIGNOR" id="Q03181"/>
<dbReference type="BioGRID-ORCS" id="5467">
    <property type="hits" value="14 hits in 1192 CRISPR screens"/>
</dbReference>
<dbReference type="ChiTaRS" id="PPARD">
    <property type="organism name" value="human"/>
</dbReference>
<dbReference type="EvolutionaryTrace" id="Q03181"/>
<dbReference type="GeneWiki" id="Peroxisome_proliferator-activated_receptor_delta"/>
<dbReference type="GenomeRNAi" id="5467"/>
<dbReference type="Pharos" id="Q03181">
    <property type="development level" value="Tchem"/>
</dbReference>
<dbReference type="PRO" id="PR:Q03181"/>
<dbReference type="Proteomes" id="UP000005640">
    <property type="component" value="Chromosome 6"/>
</dbReference>
<dbReference type="RNAct" id="Q03181">
    <property type="molecule type" value="protein"/>
</dbReference>
<dbReference type="Bgee" id="ENSG00000112033">
    <property type="expression patterns" value="Expressed in lower esophagus mucosa and 190 other cell types or tissues"/>
</dbReference>
<dbReference type="ExpressionAtlas" id="Q03181">
    <property type="expression patterns" value="baseline and differential"/>
</dbReference>
<dbReference type="GO" id="GO:0000785">
    <property type="term" value="C:chromatin"/>
    <property type="evidence" value="ECO:0000250"/>
    <property type="project" value="BHF-UCL"/>
</dbReference>
<dbReference type="GO" id="GO:0005654">
    <property type="term" value="C:nucleoplasm"/>
    <property type="evidence" value="ECO:0000304"/>
    <property type="project" value="Reactome"/>
</dbReference>
<dbReference type="GO" id="GO:0005634">
    <property type="term" value="C:nucleus"/>
    <property type="evidence" value="ECO:0000314"/>
    <property type="project" value="UniProt"/>
</dbReference>
<dbReference type="GO" id="GO:0003677">
    <property type="term" value="F:DNA binding"/>
    <property type="evidence" value="ECO:0000250"/>
    <property type="project" value="UniProtKB"/>
</dbReference>
<dbReference type="GO" id="GO:0003700">
    <property type="term" value="F:DNA-binding transcription factor activity"/>
    <property type="evidence" value="ECO:0000314"/>
    <property type="project" value="UniProtKB"/>
</dbReference>
<dbReference type="GO" id="GO:0000981">
    <property type="term" value="F:DNA-binding transcription factor activity, RNA polymerase II-specific"/>
    <property type="evidence" value="ECO:0000247"/>
    <property type="project" value="NTNU_SB"/>
</dbReference>
<dbReference type="GO" id="GO:0001227">
    <property type="term" value="F:DNA-binding transcription repressor activity, RNA polymerase II-specific"/>
    <property type="evidence" value="ECO:0000250"/>
    <property type="project" value="BHF-UCL"/>
</dbReference>
<dbReference type="GO" id="GO:0070539">
    <property type="term" value="F:linoleic acid binding"/>
    <property type="evidence" value="ECO:0000314"/>
    <property type="project" value="UniProtKB"/>
</dbReference>
<dbReference type="GO" id="GO:0008289">
    <property type="term" value="F:lipid binding"/>
    <property type="evidence" value="ECO:0000314"/>
    <property type="project" value="UniProtKB"/>
</dbReference>
<dbReference type="GO" id="GO:0051059">
    <property type="term" value="F:NF-kappaB binding"/>
    <property type="evidence" value="ECO:0007669"/>
    <property type="project" value="Ensembl"/>
</dbReference>
<dbReference type="GO" id="GO:0004879">
    <property type="term" value="F:nuclear receptor activity"/>
    <property type="evidence" value="ECO:0000314"/>
    <property type="project" value="UniProtKB"/>
</dbReference>
<dbReference type="GO" id="GO:0003707">
    <property type="term" value="F:nuclear steroid receptor activity"/>
    <property type="evidence" value="ECO:0000304"/>
    <property type="project" value="ProtInc"/>
</dbReference>
<dbReference type="GO" id="GO:0000978">
    <property type="term" value="F:RNA polymerase II cis-regulatory region sequence-specific DNA binding"/>
    <property type="evidence" value="ECO:0000318"/>
    <property type="project" value="GO_Central"/>
</dbReference>
<dbReference type="GO" id="GO:1990837">
    <property type="term" value="F:sequence-specific double-stranded DNA binding"/>
    <property type="evidence" value="ECO:0000314"/>
    <property type="project" value="ARUK-UCL"/>
</dbReference>
<dbReference type="GO" id="GO:0001223">
    <property type="term" value="F:transcription coactivator binding"/>
    <property type="evidence" value="ECO:0000353"/>
    <property type="project" value="UniProtKB"/>
</dbReference>
<dbReference type="GO" id="GO:0008270">
    <property type="term" value="F:zinc ion binding"/>
    <property type="evidence" value="ECO:0007669"/>
    <property type="project" value="UniProtKB-KW"/>
</dbReference>
<dbReference type="GO" id="GO:0060612">
    <property type="term" value="P:adipose tissue development"/>
    <property type="evidence" value="ECO:0007669"/>
    <property type="project" value="Ensembl"/>
</dbReference>
<dbReference type="GO" id="GO:0006915">
    <property type="term" value="P:apoptotic process"/>
    <property type="evidence" value="ECO:0000315"/>
    <property type="project" value="CACAO"/>
</dbReference>
<dbReference type="GO" id="GO:0097190">
    <property type="term" value="P:apoptotic signaling pathway"/>
    <property type="evidence" value="ECO:0000315"/>
    <property type="project" value="UniProtKB"/>
</dbReference>
<dbReference type="GO" id="GO:0008366">
    <property type="term" value="P:axon ensheathment"/>
    <property type="evidence" value="ECO:0000250"/>
    <property type="project" value="UniProtKB"/>
</dbReference>
<dbReference type="GO" id="GO:0030154">
    <property type="term" value="P:cell differentiation"/>
    <property type="evidence" value="ECO:0000318"/>
    <property type="project" value="GO_Central"/>
</dbReference>
<dbReference type="GO" id="GO:0008283">
    <property type="term" value="P:cell population proliferation"/>
    <property type="evidence" value="ECO:0000250"/>
    <property type="project" value="UniProtKB"/>
</dbReference>
<dbReference type="GO" id="GO:0031589">
    <property type="term" value="P:cell-substrate adhesion"/>
    <property type="evidence" value="ECO:0007669"/>
    <property type="project" value="Ensembl"/>
</dbReference>
<dbReference type="GO" id="GO:0071456">
    <property type="term" value="P:cellular response to hypoxia"/>
    <property type="evidence" value="ECO:0007669"/>
    <property type="project" value="Ensembl"/>
</dbReference>
<dbReference type="GO" id="GO:0071222">
    <property type="term" value="P:cellular response to lipopolysaccharide"/>
    <property type="evidence" value="ECO:0007669"/>
    <property type="project" value="Ensembl"/>
</dbReference>
<dbReference type="GO" id="GO:0031669">
    <property type="term" value="P:cellular response to nutrient levels"/>
    <property type="evidence" value="ECO:0000314"/>
    <property type="project" value="UniProt"/>
</dbReference>
<dbReference type="GO" id="GO:0008203">
    <property type="term" value="P:cholesterol metabolic process"/>
    <property type="evidence" value="ECO:0000304"/>
    <property type="project" value="UniProtKB"/>
</dbReference>
<dbReference type="GO" id="GO:1904659">
    <property type="term" value="P:D-glucose transmembrane transport"/>
    <property type="evidence" value="ECO:0000303"/>
    <property type="project" value="UniProtKB"/>
</dbReference>
<dbReference type="GO" id="GO:0046697">
    <property type="term" value="P:decidualization"/>
    <property type="evidence" value="ECO:0000304"/>
    <property type="project" value="UniProtKB"/>
</dbReference>
<dbReference type="GO" id="GO:0007566">
    <property type="term" value="P:embryo implantation"/>
    <property type="evidence" value="ECO:0000304"/>
    <property type="project" value="UniProtKB"/>
</dbReference>
<dbReference type="GO" id="GO:0097009">
    <property type="term" value="P:energy homeostasis"/>
    <property type="evidence" value="ECO:0000314"/>
    <property type="project" value="UniProt"/>
</dbReference>
<dbReference type="GO" id="GO:0070341">
    <property type="term" value="P:fat cell proliferation"/>
    <property type="evidence" value="ECO:0007669"/>
    <property type="project" value="Ensembl"/>
</dbReference>
<dbReference type="GO" id="GO:0006635">
    <property type="term" value="P:fatty acid beta-oxidation"/>
    <property type="evidence" value="ECO:0000250"/>
    <property type="project" value="UniProtKB"/>
</dbReference>
<dbReference type="GO" id="GO:0009062">
    <property type="term" value="P:fatty acid catabolic process"/>
    <property type="evidence" value="ECO:0000304"/>
    <property type="project" value="UniProtKB"/>
</dbReference>
<dbReference type="GO" id="GO:0006631">
    <property type="term" value="P:fatty acid metabolic process"/>
    <property type="evidence" value="ECO:0000318"/>
    <property type="project" value="GO_Central"/>
</dbReference>
<dbReference type="GO" id="GO:0015908">
    <property type="term" value="P:fatty acid transport"/>
    <property type="evidence" value="ECO:0000250"/>
    <property type="project" value="UniProtKB"/>
</dbReference>
<dbReference type="GO" id="GO:0006091">
    <property type="term" value="P:generation of precursor metabolites and energy"/>
    <property type="evidence" value="ECO:0000304"/>
    <property type="project" value="ProtInc"/>
</dbReference>
<dbReference type="GO" id="GO:0006006">
    <property type="term" value="P:glucose metabolic process"/>
    <property type="evidence" value="ECO:0000303"/>
    <property type="project" value="UniProtKB"/>
</dbReference>
<dbReference type="GO" id="GO:0007507">
    <property type="term" value="P:heart development"/>
    <property type="evidence" value="ECO:0007669"/>
    <property type="project" value="Ensembl"/>
</dbReference>
<dbReference type="GO" id="GO:0009755">
    <property type="term" value="P:hormone-mediated signaling pathway"/>
    <property type="evidence" value="ECO:0000318"/>
    <property type="project" value="GO_Central"/>
</dbReference>
<dbReference type="GO" id="GO:0030522">
    <property type="term" value="P:intracellular receptor signaling pathway"/>
    <property type="evidence" value="ECO:0000318"/>
    <property type="project" value="GO_Central"/>
</dbReference>
<dbReference type="GO" id="GO:0051546">
    <property type="term" value="P:keratinocyte migration"/>
    <property type="evidence" value="ECO:0007669"/>
    <property type="project" value="Ensembl"/>
</dbReference>
<dbReference type="GO" id="GO:0043616">
    <property type="term" value="P:keratinocyte proliferation"/>
    <property type="evidence" value="ECO:0007669"/>
    <property type="project" value="Ensembl"/>
</dbReference>
<dbReference type="GO" id="GO:0006629">
    <property type="term" value="P:lipid metabolic process"/>
    <property type="evidence" value="ECO:0000250"/>
    <property type="project" value="UniProtKB"/>
</dbReference>
<dbReference type="GO" id="GO:0043066">
    <property type="term" value="P:negative regulation of apoptotic process"/>
    <property type="evidence" value="ECO:0007669"/>
    <property type="project" value="Ensembl"/>
</dbReference>
<dbReference type="GO" id="GO:0030308">
    <property type="term" value="P:negative regulation of cell growth"/>
    <property type="evidence" value="ECO:0007669"/>
    <property type="project" value="Ensembl"/>
</dbReference>
<dbReference type="GO" id="GO:0010887">
    <property type="term" value="P:negative regulation of cholesterol storage"/>
    <property type="evidence" value="ECO:0000318"/>
    <property type="project" value="GO_Central"/>
</dbReference>
<dbReference type="GO" id="GO:0032966">
    <property type="term" value="P:negative regulation of collagen biosynthetic process"/>
    <property type="evidence" value="ECO:0007669"/>
    <property type="project" value="Ensembl"/>
</dbReference>
<dbReference type="GO" id="GO:0045892">
    <property type="term" value="P:negative regulation of DNA-templated transcription"/>
    <property type="evidence" value="ECO:0000250"/>
    <property type="project" value="UniProtKB"/>
</dbReference>
<dbReference type="GO" id="GO:0050680">
    <property type="term" value="P:negative regulation of epithelial cell proliferation"/>
    <property type="evidence" value="ECO:0007669"/>
    <property type="project" value="Ensembl"/>
</dbReference>
<dbReference type="GO" id="GO:0050728">
    <property type="term" value="P:negative regulation of inflammatory response"/>
    <property type="evidence" value="ECO:0000318"/>
    <property type="project" value="GO_Central"/>
</dbReference>
<dbReference type="GO" id="GO:1902894">
    <property type="term" value="P:negative regulation of miRNA transcription"/>
    <property type="evidence" value="ECO:0000250"/>
    <property type="project" value="BHF-UCL"/>
</dbReference>
<dbReference type="GO" id="GO:0045662">
    <property type="term" value="P:negative regulation of myoblast differentiation"/>
    <property type="evidence" value="ECO:0007669"/>
    <property type="project" value="Ensembl"/>
</dbReference>
<dbReference type="GO" id="GO:0014912">
    <property type="term" value="P:negative regulation of smooth muscle cell migration"/>
    <property type="evidence" value="ECO:0007669"/>
    <property type="project" value="Ensembl"/>
</dbReference>
<dbReference type="GO" id="GO:0048662">
    <property type="term" value="P:negative regulation of smooth muscle cell proliferation"/>
    <property type="evidence" value="ECO:0007669"/>
    <property type="project" value="Ensembl"/>
</dbReference>
<dbReference type="GO" id="GO:0000122">
    <property type="term" value="P:negative regulation of transcription by RNA polymerase II"/>
    <property type="evidence" value="ECO:0000250"/>
    <property type="project" value="UniProtKB"/>
</dbReference>
<dbReference type="GO" id="GO:0043491">
    <property type="term" value="P:phosphatidylinositol 3-kinase/protein kinase B signal transduction"/>
    <property type="evidence" value="ECO:0007669"/>
    <property type="project" value="Ensembl"/>
</dbReference>
<dbReference type="GO" id="GO:0008654">
    <property type="term" value="P:phospholipid biosynthetic process"/>
    <property type="evidence" value="ECO:0007669"/>
    <property type="project" value="Ensembl"/>
</dbReference>
<dbReference type="GO" id="GO:0045893">
    <property type="term" value="P:positive regulation of DNA-templated transcription"/>
    <property type="evidence" value="ECO:0000314"/>
    <property type="project" value="UniProtKB"/>
</dbReference>
<dbReference type="GO" id="GO:0045684">
    <property type="term" value="P:positive regulation of epidermis development"/>
    <property type="evidence" value="ECO:0007669"/>
    <property type="project" value="Ensembl"/>
</dbReference>
<dbReference type="GO" id="GO:0045600">
    <property type="term" value="P:positive regulation of fat cell differentiation"/>
    <property type="evidence" value="ECO:0000303"/>
    <property type="project" value="UniProtKB"/>
</dbReference>
<dbReference type="GO" id="GO:0070346">
    <property type="term" value="P:positive regulation of fat cell proliferation"/>
    <property type="evidence" value="ECO:0007669"/>
    <property type="project" value="Ensembl"/>
</dbReference>
<dbReference type="GO" id="GO:0045923">
    <property type="term" value="P:positive regulation of fatty acid metabolic process"/>
    <property type="evidence" value="ECO:0000318"/>
    <property type="project" value="GO_Central"/>
</dbReference>
<dbReference type="GO" id="GO:0046321">
    <property type="term" value="P:positive regulation of fatty acid oxidation"/>
    <property type="evidence" value="ECO:0007669"/>
    <property type="project" value="Ensembl"/>
</dbReference>
<dbReference type="GO" id="GO:0010628">
    <property type="term" value="P:positive regulation of gene expression"/>
    <property type="evidence" value="ECO:0007669"/>
    <property type="project" value="Ensembl"/>
</dbReference>
<dbReference type="GO" id="GO:0035774">
    <property type="term" value="P:positive regulation of insulin secretion involved in cellular response to glucose stimulus"/>
    <property type="evidence" value="ECO:0007669"/>
    <property type="project" value="Ensembl"/>
</dbReference>
<dbReference type="GO" id="GO:2000288">
    <property type="term" value="P:positive regulation of myoblast proliferation"/>
    <property type="evidence" value="ECO:0007669"/>
    <property type="project" value="Ensembl"/>
</dbReference>
<dbReference type="GO" id="GO:0051897">
    <property type="term" value="P:positive regulation of phosphatidylinositol 3-kinase/protein kinase B signal transduction"/>
    <property type="evidence" value="ECO:0007669"/>
    <property type="project" value="Ensembl"/>
</dbReference>
<dbReference type="GO" id="GO:0043415">
    <property type="term" value="P:positive regulation of skeletal muscle tissue regeneration"/>
    <property type="evidence" value="ECO:0007669"/>
    <property type="project" value="Ensembl"/>
</dbReference>
<dbReference type="GO" id="GO:0045944">
    <property type="term" value="P:positive regulation of transcription by RNA polymerase II"/>
    <property type="evidence" value="ECO:0000318"/>
    <property type="project" value="GO_Central"/>
</dbReference>
<dbReference type="GO" id="GO:0006029">
    <property type="term" value="P:proteoglycan metabolic process"/>
    <property type="evidence" value="ECO:0007669"/>
    <property type="project" value="Ensembl"/>
</dbReference>
<dbReference type="GO" id="GO:0014842">
    <property type="term" value="P:regulation of skeletal muscle satellite cell proliferation"/>
    <property type="evidence" value="ECO:0007669"/>
    <property type="project" value="Ensembl"/>
</dbReference>
<dbReference type="GO" id="GO:0006357">
    <property type="term" value="P:regulation of transcription by RNA polymerase II"/>
    <property type="evidence" value="ECO:0000314"/>
    <property type="project" value="UniProt"/>
</dbReference>
<dbReference type="GO" id="GO:0014823">
    <property type="term" value="P:response to activity"/>
    <property type="evidence" value="ECO:0007669"/>
    <property type="project" value="Ensembl"/>
</dbReference>
<dbReference type="GO" id="GO:0009749">
    <property type="term" value="P:response to glucose"/>
    <property type="evidence" value="ECO:0007669"/>
    <property type="project" value="Ensembl"/>
</dbReference>
<dbReference type="GO" id="GO:0033189">
    <property type="term" value="P:response to vitamin A"/>
    <property type="evidence" value="ECO:0007669"/>
    <property type="project" value="Ensembl"/>
</dbReference>
<dbReference type="GO" id="GO:0042311">
    <property type="term" value="P:vasodilation"/>
    <property type="evidence" value="ECO:0007669"/>
    <property type="project" value="Ensembl"/>
</dbReference>
<dbReference type="GO" id="GO:0042060">
    <property type="term" value="P:wound healing"/>
    <property type="evidence" value="ECO:0007669"/>
    <property type="project" value="Ensembl"/>
</dbReference>
<dbReference type="CDD" id="cd06965">
    <property type="entry name" value="NR_DBD_Ppar"/>
    <property type="match status" value="1"/>
</dbReference>
<dbReference type="CDD" id="cd06932">
    <property type="entry name" value="NR_LBD_PPAR"/>
    <property type="match status" value="1"/>
</dbReference>
<dbReference type="FunFam" id="1.10.565.10:FF:000013">
    <property type="entry name" value="Peroxisome proliferator-activated receptor delta"/>
    <property type="match status" value="1"/>
</dbReference>
<dbReference type="FunFam" id="3.30.50.10:FF:000010">
    <property type="entry name" value="Peroxisome proliferator-activated receptor gamma"/>
    <property type="match status" value="1"/>
</dbReference>
<dbReference type="Gene3D" id="3.30.50.10">
    <property type="entry name" value="Erythroid Transcription Factor GATA-1, subunit A"/>
    <property type="match status" value="1"/>
</dbReference>
<dbReference type="Gene3D" id="1.10.565.10">
    <property type="entry name" value="Retinoid X Receptor"/>
    <property type="match status" value="1"/>
</dbReference>
<dbReference type="InterPro" id="IPR003074">
    <property type="entry name" value="1Cnucl_rcpt"/>
</dbReference>
<dbReference type="InterPro" id="IPR003075">
    <property type="entry name" value="1Cnucl_rcpt_B"/>
</dbReference>
<dbReference type="InterPro" id="IPR035500">
    <property type="entry name" value="NHR-like_dom_sf"/>
</dbReference>
<dbReference type="InterPro" id="IPR000536">
    <property type="entry name" value="Nucl_hrmn_rcpt_lig-bd"/>
</dbReference>
<dbReference type="InterPro" id="IPR050234">
    <property type="entry name" value="Nuclear_hormone_rcpt_NR1"/>
</dbReference>
<dbReference type="InterPro" id="IPR001723">
    <property type="entry name" value="Nuclear_hrmn_rcpt"/>
</dbReference>
<dbReference type="InterPro" id="IPR001628">
    <property type="entry name" value="Znf_hrmn_rcpt"/>
</dbReference>
<dbReference type="InterPro" id="IPR013088">
    <property type="entry name" value="Znf_NHR/GATA"/>
</dbReference>
<dbReference type="PANTHER" id="PTHR24082">
    <property type="entry name" value="NUCLEAR HORMONE RECEPTOR"/>
    <property type="match status" value="1"/>
</dbReference>
<dbReference type="PANTHER" id="PTHR24082:SF15">
    <property type="entry name" value="PEROXISOME PROLIFERATOR-ACTIVATED RECEPTOR DELTA"/>
    <property type="match status" value="1"/>
</dbReference>
<dbReference type="Pfam" id="PF00104">
    <property type="entry name" value="Hormone_recep"/>
    <property type="match status" value="1"/>
</dbReference>
<dbReference type="Pfam" id="PF00105">
    <property type="entry name" value="zf-C4"/>
    <property type="match status" value="1"/>
</dbReference>
<dbReference type="PRINTS" id="PR01288">
    <property type="entry name" value="PROXISOMEPAR"/>
</dbReference>
<dbReference type="PRINTS" id="PR01290">
    <property type="entry name" value="PROXISOMPABR"/>
</dbReference>
<dbReference type="PRINTS" id="PR00398">
    <property type="entry name" value="STRDHORMONER"/>
</dbReference>
<dbReference type="PRINTS" id="PR00047">
    <property type="entry name" value="STROIDFINGER"/>
</dbReference>
<dbReference type="SMART" id="SM00430">
    <property type="entry name" value="HOLI"/>
    <property type="match status" value="1"/>
</dbReference>
<dbReference type="SMART" id="SM00399">
    <property type="entry name" value="ZnF_C4"/>
    <property type="match status" value="1"/>
</dbReference>
<dbReference type="SUPFAM" id="SSF57716">
    <property type="entry name" value="Glucocorticoid receptor-like (DNA-binding domain)"/>
    <property type="match status" value="1"/>
</dbReference>
<dbReference type="SUPFAM" id="SSF48508">
    <property type="entry name" value="Nuclear receptor ligand-binding domain"/>
    <property type="match status" value="1"/>
</dbReference>
<dbReference type="PROSITE" id="PS51843">
    <property type="entry name" value="NR_LBD"/>
    <property type="match status" value="1"/>
</dbReference>
<dbReference type="PROSITE" id="PS00031">
    <property type="entry name" value="NUCLEAR_REC_DBD_1"/>
    <property type="match status" value="1"/>
</dbReference>
<dbReference type="PROSITE" id="PS51030">
    <property type="entry name" value="NUCLEAR_REC_DBD_2"/>
    <property type="match status" value="1"/>
</dbReference>
<proteinExistence type="evidence at protein level"/>
<keyword id="KW-0002">3D-structure</keyword>
<keyword id="KW-0010">Activator</keyword>
<keyword id="KW-0025">Alternative splicing</keyword>
<keyword id="KW-0238">DNA-binding</keyword>
<keyword id="KW-0479">Metal-binding</keyword>
<keyword id="KW-0539">Nucleus</keyword>
<keyword id="KW-1267">Proteomics identification</keyword>
<keyword id="KW-0675">Receptor</keyword>
<keyword id="KW-1185">Reference proteome</keyword>
<keyword id="KW-0804">Transcription</keyword>
<keyword id="KW-0805">Transcription regulation</keyword>
<keyword id="KW-0832">Ubl conjugation</keyword>
<keyword id="KW-0862">Zinc</keyword>
<keyword id="KW-0863">Zinc-finger</keyword>
<comment type="function">
    <text evidence="6 7 13">Ligand-activated transcription factor key mediator of energy metabolism in adipose tissues (PubMed:35675826). Receptor that binds peroxisome proliferators such as hypolipidemic drugs and fatty acids. Has a preference for poly-unsaturated fatty acids, such as gamma-linoleic acid and eicosapentanoic acid. Once activated by a ligand, the receptor binds to promoter elements of target genes. Regulates the peroxisomal beta-oxidation pathway of fatty acids. Functions as transcription activator for the acyl-CoA oxidase gene. Decreases expression of NPC1L1 once activated by a ligand.</text>
</comment>
<comment type="subunit">
    <text evidence="1 5 8 9 10 11 12">Heterodimer with the retinoid X receptor. Interacts (via domain NR LBD) with CRY1 and CRY2 in a ligand-dependent manner (By similarity).</text>
</comment>
<comment type="interaction">
    <interactant intactId="EBI-6426768">
        <id>Q03181</id>
    </interactant>
    <interactant intactId="EBI-710124">
        <id>O60341</id>
        <label>KDM1A</label>
    </interactant>
    <organismsDiffer>false</organismsDiffer>
    <experiments>2</experiments>
</comment>
<comment type="interaction">
    <interactant intactId="EBI-6426768">
        <id>Q03181</id>
    </interactant>
    <interactant intactId="EBI-21458417">
        <id>P55055-1</id>
        <label>NR1H2</label>
    </interactant>
    <organismsDiffer>false</organismsDiffer>
    <experiments>2</experiments>
</comment>
<comment type="interaction">
    <interactant intactId="EBI-6426768">
        <id>Q03181</id>
    </interactant>
    <interactant intactId="EBI-781356">
        <id>Q13133</id>
        <label>NR1H3</label>
    </interactant>
    <organismsDiffer>false</organismsDiffer>
    <experiments>2</experiments>
</comment>
<comment type="interaction">
    <interactant intactId="EBI-10223258">
        <id>Q03181-2</id>
    </interactant>
    <interactant intactId="EBI-466029">
        <id>P42858</id>
        <label>HTT</label>
    </interactant>
    <organismsDiffer>false</organismsDiffer>
    <experiments>3</experiments>
</comment>
<comment type="interaction">
    <interactant intactId="EBI-10223258">
        <id>Q03181-2</id>
    </interactant>
    <interactant intactId="EBI-10172290">
        <id>P60409</id>
        <label>KRTAP10-7</label>
    </interactant>
    <organismsDiffer>false</organismsDiffer>
    <experiments>3</experiments>
</comment>
<comment type="interaction">
    <interactant intactId="EBI-10223258">
        <id>Q03181-2</id>
    </interactant>
    <interactant intactId="EBI-351935">
        <id>P02545</id>
        <label>LMNA</label>
    </interactant>
    <organismsDiffer>false</organismsDiffer>
    <experiments>3</experiments>
</comment>
<comment type="interaction">
    <interactant intactId="EBI-10223258">
        <id>Q03181-2</id>
    </interactant>
    <interactant intactId="EBI-5235340">
        <id>Q7Z699</id>
        <label>SPRED1</label>
    </interactant>
    <organismsDiffer>false</organismsDiffer>
    <experiments>3</experiments>
</comment>
<comment type="interaction">
    <interactant intactId="EBI-10223258">
        <id>Q03181-2</id>
    </interactant>
    <interactant intactId="EBI-11962574">
        <id>Q96EG3</id>
        <label>ZNF837</label>
    </interactant>
    <organismsDiffer>false</organismsDiffer>
    <experiments>3</experiments>
</comment>
<comment type="subcellular location">
    <subcellularLocation>
        <location evidence="13">Nucleus</location>
    </subcellularLocation>
</comment>
<comment type="alternative products">
    <event type="alternative splicing"/>
    <isoform>
        <id>Q03181-1</id>
        <name>1</name>
        <sequence type="displayed"/>
    </isoform>
    <isoform>
        <id>Q03181-2</id>
        <name>2</name>
        <sequence type="described" ref="VSP_010133 VSP_010134"/>
    </isoform>
    <isoform>
        <id>Q03181-3</id>
        <name>3</name>
        <sequence type="described" ref="VSP_043787"/>
    </isoform>
    <isoform>
        <id>Q03181-4</id>
        <name>4</name>
        <sequence type="described" ref="VSP_046104"/>
    </isoform>
</comment>
<comment type="tissue specificity">
    <text>Ubiquitous with maximal levels in placenta and skeletal muscle.</text>
</comment>
<comment type="PTM">
    <text evidence="13">'Lys-48'-linked polyubiquitinated; leading to proteasomal degradation (PubMed:35675826). Deubiquitinated and stabilized by OTUD3 (PubMed:35675826).</text>
</comment>
<comment type="similarity">
    <text evidence="16">Belongs to the nuclear hormone receptor family. NR1 subfamily.</text>
</comment>
<comment type="online information" name="Wikipedia">
    <link uri="https://en.wikipedia.org/wiki/Peroxisome_proliferator-activated_receptor"/>
    <text>Peroxisome proliferator-activated receptor entry</text>
</comment>
<comment type="online information" name="Atlas of Genetics and Cytogenetics in Oncology and Haematology">
    <link uri="https://atlasgeneticsoncology.org/gene/41794/PPARD"/>
</comment>
<accession>Q03181</accession>
<accession>A8K6J6</accession>
<accession>B4E3V3</accession>
<accession>B6ZGS1</accession>
<accession>B7Z3W1</accession>
<accession>E9PE18</accession>
<accession>Q5D1P0</accession>
<accession>Q7Z5K0</accession>
<accession>Q9BUD4</accession>
<name>PPARD_HUMAN</name>
<organism>
    <name type="scientific">Homo sapiens</name>
    <name type="common">Human</name>
    <dbReference type="NCBI Taxonomy" id="9606"/>
    <lineage>
        <taxon>Eukaryota</taxon>
        <taxon>Metazoa</taxon>
        <taxon>Chordata</taxon>
        <taxon>Craniata</taxon>
        <taxon>Vertebrata</taxon>
        <taxon>Euteleostomi</taxon>
        <taxon>Mammalia</taxon>
        <taxon>Eutheria</taxon>
        <taxon>Euarchontoglires</taxon>
        <taxon>Primates</taxon>
        <taxon>Haplorrhini</taxon>
        <taxon>Catarrhini</taxon>
        <taxon>Hominidae</taxon>
        <taxon>Homo</taxon>
    </lineage>
</organism>
<protein>
    <recommendedName>
        <fullName>Peroxisome proliferator-activated receptor delta</fullName>
        <shortName>PPAR-delta</shortName>
    </recommendedName>
    <alternativeName>
        <fullName>NUCI</fullName>
    </alternativeName>
    <alternativeName>
        <fullName>Nuclear hormone receptor 1</fullName>
        <shortName>NUC1</shortName>
    </alternativeName>
    <alternativeName>
        <fullName>Nuclear receptor subfamily 1 group C member 2</fullName>
    </alternativeName>
    <alternativeName>
        <fullName>Peroxisome proliferator-activated receptor beta</fullName>
        <shortName>PPAR-beta</shortName>
    </alternativeName>
</protein>
<reference key="1">
    <citation type="journal article" date="1992" name="Mol. Endocrinol.">
        <title>Identification of a new member of the steroid hormone receptor superfamily that is activated by a peroxisome proliferator and fatty acids.</title>
        <authorList>
            <person name="Schmidt A."/>
            <person name="Endo N."/>
            <person name="Rutledge S.J."/>
            <person name="Vogel R."/>
            <person name="Shinar D."/>
            <person name="Rodan G.A."/>
        </authorList>
    </citation>
    <scope>NUCLEOTIDE SEQUENCE [MRNA] (ISOFORM 1)</scope>
    <scope>FUNCTION</scope>
    <scope>FATTY ACID BINDING</scope>
</reference>
<reference key="2">
    <citation type="journal article" date="2000" name="Int. J. Mol. Med.">
        <title>Characterization of the human peroxisome proliferator activated receptor delta gene and its expression.</title>
        <authorList>
            <person name="Skogsberg J."/>
            <person name="Kannisto K."/>
            <person name="Roshani L."/>
            <person name="Gagne E."/>
            <person name="Hamsten A."/>
            <person name="Larsson C."/>
            <person name="Ehrenborg E."/>
        </authorList>
    </citation>
    <scope>NUCLEOTIDE SEQUENCE [GENOMIC DNA] (ISOFORM 1)</scope>
    <source>
        <tissue>Placenta</tissue>
    </source>
</reference>
<reference key="3">
    <citation type="journal article" date="2008" name="FEBS Lett.">
        <title>DNA-binding profiling of human hormone nuclear receptors via fluorescence correlation spectroscopy in a cell-free system.</title>
        <authorList>
            <person name="Kobayashi T."/>
            <person name="Kodani Y."/>
            <person name="Nozawa A."/>
            <person name="Endo Y."/>
            <person name="Sawasaki T."/>
        </authorList>
    </citation>
    <scope>NUCLEOTIDE SEQUENCE [MRNA] (ISOFORM 1)</scope>
</reference>
<reference key="4">
    <citation type="submission" date="2005-02" db="EMBL/GenBank/DDBJ databases">
        <title>Human PPARdelta cDNA.</title>
        <authorList>
            <person name="Cho M.-C."/>
            <person name="Yoon D.-Y."/>
        </authorList>
    </citation>
    <scope>NUCLEOTIDE SEQUENCE [MRNA] (ISOFORM 1)</scope>
    <source>
        <tissue>Spleen</tissue>
    </source>
</reference>
<reference key="5">
    <citation type="journal article" date="2004" name="Nat. Genet.">
        <title>Complete sequencing and characterization of 21,243 full-length human cDNAs.</title>
        <authorList>
            <person name="Ota T."/>
            <person name="Suzuki Y."/>
            <person name="Nishikawa T."/>
            <person name="Otsuki T."/>
            <person name="Sugiyama T."/>
            <person name="Irie R."/>
            <person name="Wakamatsu A."/>
            <person name="Hayashi K."/>
            <person name="Sato H."/>
            <person name="Nagai K."/>
            <person name="Kimura K."/>
            <person name="Makita H."/>
            <person name="Sekine M."/>
            <person name="Obayashi M."/>
            <person name="Nishi T."/>
            <person name="Shibahara T."/>
            <person name="Tanaka T."/>
            <person name="Ishii S."/>
            <person name="Yamamoto J."/>
            <person name="Saito K."/>
            <person name="Kawai Y."/>
            <person name="Isono Y."/>
            <person name="Nakamura Y."/>
            <person name="Nagahari K."/>
            <person name="Murakami K."/>
            <person name="Yasuda T."/>
            <person name="Iwayanagi T."/>
            <person name="Wagatsuma M."/>
            <person name="Shiratori A."/>
            <person name="Sudo H."/>
            <person name="Hosoiri T."/>
            <person name="Kaku Y."/>
            <person name="Kodaira H."/>
            <person name="Kondo H."/>
            <person name="Sugawara M."/>
            <person name="Takahashi M."/>
            <person name="Kanda K."/>
            <person name="Yokoi T."/>
            <person name="Furuya T."/>
            <person name="Kikkawa E."/>
            <person name="Omura Y."/>
            <person name="Abe K."/>
            <person name="Kamihara K."/>
            <person name="Katsuta N."/>
            <person name="Sato K."/>
            <person name="Tanikawa M."/>
            <person name="Yamazaki M."/>
            <person name="Ninomiya K."/>
            <person name="Ishibashi T."/>
            <person name="Yamashita H."/>
            <person name="Murakawa K."/>
            <person name="Fujimori K."/>
            <person name="Tanai H."/>
            <person name="Kimata M."/>
            <person name="Watanabe M."/>
            <person name="Hiraoka S."/>
            <person name="Chiba Y."/>
            <person name="Ishida S."/>
            <person name="Ono Y."/>
            <person name="Takiguchi S."/>
            <person name="Watanabe S."/>
            <person name="Yosida M."/>
            <person name="Hotuta T."/>
            <person name="Kusano J."/>
            <person name="Kanehori K."/>
            <person name="Takahashi-Fujii A."/>
            <person name="Hara H."/>
            <person name="Tanase T.-O."/>
            <person name="Nomura Y."/>
            <person name="Togiya S."/>
            <person name="Komai F."/>
            <person name="Hara R."/>
            <person name="Takeuchi K."/>
            <person name="Arita M."/>
            <person name="Imose N."/>
            <person name="Musashino K."/>
            <person name="Yuuki H."/>
            <person name="Oshima A."/>
            <person name="Sasaki N."/>
            <person name="Aotsuka S."/>
            <person name="Yoshikawa Y."/>
            <person name="Matsunawa H."/>
            <person name="Ichihara T."/>
            <person name="Shiohata N."/>
            <person name="Sano S."/>
            <person name="Moriya S."/>
            <person name="Momiyama H."/>
            <person name="Satoh N."/>
            <person name="Takami S."/>
            <person name="Terashima Y."/>
            <person name="Suzuki O."/>
            <person name="Nakagawa S."/>
            <person name="Senoh A."/>
            <person name="Mizoguchi H."/>
            <person name="Goto Y."/>
            <person name="Shimizu F."/>
            <person name="Wakebe H."/>
            <person name="Hishigaki H."/>
            <person name="Watanabe T."/>
            <person name="Sugiyama A."/>
            <person name="Takemoto M."/>
            <person name="Kawakami B."/>
            <person name="Yamazaki M."/>
            <person name="Watanabe K."/>
            <person name="Kumagai A."/>
            <person name="Itakura S."/>
            <person name="Fukuzumi Y."/>
            <person name="Fujimori Y."/>
            <person name="Komiyama M."/>
            <person name="Tashiro H."/>
            <person name="Tanigami A."/>
            <person name="Fujiwara T."/>
            <person name="Ono T."/>
            <person name="Yamada K."/>
            <person name="Fujii Y."/>
            <person name="Ozaki K."/>
            <person name="Hirao M."/>
            <person name="Ohmori Y."/>
            <person name="Kawabata A."/>
            <person name="Hikiji T."/>
            <person name="Kobatake N."/>
            <person name="Inagaki H."/>
            <person name="Ikema Y."/>
            <person name="Okamoto S."/>
            <person name="Okitani R."/>
            <person name="Kawakami T."/>
            <person name="Noguchi S."/>
            <person name="Itoh T."/>
            <person name="Shigeta K."/>
            <person name="Senba T."/>
            <person name="Matsumura K."/>
            <person name="Nakajima Y."/>
            <person name="Mizuno T."/>
            <person name="Morinaga M."/>
            <person name="Sasaki M."/>
            <person name="Togashi T."/>
            <person name="Oyama M."/>
            <person name="Hata H."/>
            <person name="Watanabe M."/>
            <person name="Komatsu T."/>
            <person name="Mizushima-Sugano J."/>
            <person name="Satoh T."/>
            <person name="Shirai Y."/>
            <person name="Takahashi Y."/>
            <person name="Nakagawa K."/>
            <person name="Okumura K."/>
            <person name="Nagase T."/>
            <person name="Nomura N."/>
            <person name="Kikuchi H."/>
            <person name="Masuho Y."/>
            <person name="Yamashita R."/>
            <person name="Nakai K."/>
            <person name="Yada T."/>
            <person name="Nakamura Y."/>
            <person name="Ohara O."/>
            <person name="Isogai T."/>
            <person name="Sugano S."/>
        </authorList>
    </citation>
    <scope>NUCLEOTIDE SEQUENCE [LARGE SCALE MRNA] (ISOFORMS 1; 3 AND 4)</scope>
    <source>
        <tissue>Placenta</tissue>
        <tissue>Thalamus</tissue>
    </source>
</reference>
<reference key="6">
    <citation type="submission" date="2003-10" db="EMBL/GenBank/DDBJ databases">
        <authorList>
            <consortium name="NIEHS SNPs program"/>
        </authorList>
    </citation>
    <scope>NUCLEOTIDE SEQUENCE [GENOMIC DNA]</scope>
</reference>
<reference key="7">
    <citation type="journal article" date="2003" name="Nature">
        <title>The DNA sequence and analysis of human chromosome 6.</title>
        <authorList>
            <person name="Mungall A.J."/>
            <person name="Palmer S.A."/>
            <person name="Sims S.K."/>
            <person name="Edwards C.A."/>
            <person name="Ashurst J.L."/>
            <person name="Wilming L."/>
            <person name="Jones M.C."/>
            <person name="Horton R."/>
            <person name="Hunt S.E."/>
            <person name="Scott C.E."/>
            <person name="Gilbert J.G.R."/>
            <person name="Clamp M.E."/>
            <person name="Bethel G."/>
            <person name="Milne S."/>
            <person name="Ainscough R."/>
            <person name="Almeida J.P."/>
            <person name="Ambrose K.D."/>
            <person name="Andrews T.D."/>
            <person name="Ashwell R.I.S."/>
            <person name="Babbage A.K."/>
            <person name="Bagguley C.L."/>
            <person name="Bailey J."/>
            <person name="Banerjee R."/>
            <person name="Barker D.J."/>
            <person name="Barlow K.F."/>
            <person name="Bates K."/>
            <person name="Beare D.M."/>
            <person name="Beasley H."/>
            <person name="Beasley O."/>
            <person name="Bird C.P."/>
            <person name="Blakey S.E."/>
            <person name="Bray-Allen S."/>
            <person name="Brook J."/>
            <person name="Brown A.J."/>
            <person name="Brown J.Y."/>
            <person name="Burford D.C."/>
            <person name="Burrill W."/>
            <person name="Burton J."/>
            <person name="Carder C."/>
            <person name="Carter N.P."/>
            <person name="Chapman J.C."/>
            <person name="Clark S.Y."/>
            <person name="Clark G."/>
            <person name="Clee C.M."/>
            <person name="Clegg S."/>
            <person name="Cobley V."/>
            <person name="Collier R.E."/>
            <person name="Collins J.E."/>
            <person name="Colman L.K."/>
            <person name="Corby N.R."/>
            <person name="Coville G.J."/>
            <person name="Culley K.M."/>
            <person name="Dhami P."/>
            <person name="Davies J."/>
            <person name="Dunn M."/>
            <person name="Earthrowl M.E."/>
            <person name="Ellington A.E."/>
            <person name="Evans K.A."/>
            <person name="Faulkner L."/>
            <person name="Francis M.D."/>
            <person name="Frankish A."/>
            <person name="Frankland J."/>
            <person name="French L."/>
            <person name="Garner P."/>
            <person name="Garnett J."/>
            <person name="Ghori M.J."/>
            <person name="Gilby L.M."/>
            <person name="Gillson C.J."/>
            <person name="Glithero R.J."/>
            <person name="Grafham D.V."/>
            <person name="Grant M."/>
            <person name="Gribble S."/>
            <person name="Griffiths C."/>
            <person name="Griffiths M.N.D."/>
            <person name="Hall R."/>
            <person name="Halls K.S."/>
            <person name="Hammond S."/>
            <person name="Harley J.L."/>
            <person name="Hart E.A."/>
            <person name="Heath P.D."/>
            <person name="Heathcott R."/>
            <person name="Holmes S.J."/>
            <person name="Howden P.J."/>
            <person name="Howe K.L."/>
            <person name="Howell G.R."/>
            <person name="Huckle E."/>
            <person name="Humphray S.J."/>
            <person name="Humphries M.D."/>
            <person name="Hunt A.R."/>
            <person name="Johnson C.M."/>
            <person name="Joy A.A."/>
            <person name="Kay M."/>
            <person name="Keenan S.J."/>
            <person name="Kimberley A.M."/>
            <person name="King A."/>
            <person name="Laird G.K."/>
            <person name="Langford C."/>
            <person name="Lawlor S."/>
            <person name="Leongamornlert D.A."/>
            <person name="Leversha M."/>
            <person name="Lloyd C.R."/>
            <person name="Lloyd D.M."/>
            <person name="Loveland J.E."/>
            <person name="Lovell J."/>
            <person name="Martin S."/>
            <person name="Mashreghi-Mohammadi M."/>
            <person name="Maslen G.L."/>
            <person name="Matthews L."/>
            <person name="McCann O.T."/>
            <person name="McLaren S.J."/>
            <person name="McLay K."/>
            <person name="McMurray A."/>
            <person name="Moore M.J.F."/>
            <person name="Mullikin J.C."/>
            <person name="Niblett D."/>
            <person name="Nickerson T."/>
            <person name="Novik K.L."/>
            <person name="Oliver K."/>
            <person name="Overton-Larty E.K."/>
            <person name="Parker A."/>
            <person name="Patel R."/>
            <person name="Pearce A.V."/>
            <person name="Peck A.I."/>
            <person name="Phillimore B.J.C.T."/>
            <person name="Phillips S."/>
            <person name="Plumb R.W."/>
            <person name="Porter K.M."/>
            <person name="Ramsey Y."/>
            <person name="Ranby S.A."/>
            <person name="Rice C.M."/>
            <person name="Ross M.T."/>
            <person name="Searle S.M."/>
            <person name="Sehra H.K."/>
            <person name="Sheridan E."/>
            <person name="Skuce C.D."/>
            <person name="Smith S."/>
            <person name="Smith M."/>
            <person name="Spraggon L."/>
            <person name="Squares S.L."/>
            <person name="Steward C.A."/>
            <person name="Sycamore N."/>
            <person name="Tamlyn-Hall G."/>
            <person name="Tester J."/>
            <person name="Theaker A.J."/>
            <person name="Thomas D.W."/>
            <person name="Thorpe A."/>
            <person name="Tracey A."/>
            <person name="Tromans A."/>
            <person name="Tubby B."/>
            <person name="Wall M."/>
            <person name="Wallis J.M."/>
            <person name="West A.P."/>
            <person name="White S.S."/>
            <person name="Whitehead S.L."/>
            <person name="Whittaker H."/>
            <person name="Wild A."/>
            <person name="Willey D.J."/>
            <person name="Wilmer T.E."/>
            <person name="Wood J.M."/>
            <person name="Wray P.W."/>
            <person name="Wyatt J.C."/>
            <person name="Young L."/>
            <person name="Younger R.M."/>
            <person name="Bentley D.R."/>
            <person name="Coulson A."/>
            <person name="Durbin R.M."/>
            <person name="Hubbard T."/>
            <person name="Sulston J.E."/>
            <person name="Dunham I."/>
            <person name="Rogers J."/>
            <person name="Beck S."/>
        </authorList>
    </citation>
    <scope>NUCLEOTIDE SEQUENCE [LARGE SCALE GENOMIC DNA]</scope>
</reference>
<reference key="8">
    <citation type="submission" date="2005-07" db="EMBL/GenBank/DDBJ databases">
        <authorList>
            <person name="Mural R.J."/>
            <person name="Istrail S."/>
            <person name="Sutton G.G."/>
            <person name="Florea L."/>
            <person name="Halpern A.L."/>
            <person name="Mobarry C.M."/>
            <person name="Lippert R."/>
            <person name="Walenz B."/>
            <person name="Shatkay H."/>
            <person name="Dew I."/>
            <person name="Miller J.R."/>
            <person name="Flanigan M.J."/>
            <person name="Edwards N.J."/>
            <person name="Bolanos R."/>
            <person name="Fasulo D."/>
            <person name="Halldorsson B.V."/>
            <person name="Hannenhalli S."/>
            <person name="Turner R."/>
            <person name="Yooseph S."/>
            <person name="Lu F."/>
            <person name="Nusskern D.R."/>
            <person name="Shue B.C."/>
            <person name="Zheng X.H."/>
            <person name="Zhong F."/>
            <person name="Delcher A.L."/>
            <person name="Huson D.H."/>
            <person name="Kravitz S.A."/>
            <person name="Mouchard L."/>
            <person name="Reinert K."/>
            <person name="Remington K.A."/>
            <person name="Clark A.G."/>
            <person name="Waterman M.S."/>
            <person name="Eichler E.E."/>
            <person name="Adams M.D."/>
            <person name="Hunkapiller M.W."/>
            <person name="Myers E.W."/>
            <person name="Venter J.C."/>
        </authorList>
    </citation>
    <scope>NUCLEOTIDE SEQUENCE [LARGE SCALE GENOMIC DNA]</scope>
</reference>
<reference key="9">
    <citation type="journal article" date="2004" name="Genome Res.">
        <title>The status, quality, and expansion of the NIH full-length cDNA project: the Mammalian Gene Collection (MGC).</title>
        <authorList>
            <consortium name="The MGC Project Team"/>
        </authorList>
    </citation>
    <scope>NUCLEOTIDE SEQUENCE [LARGE SCALE MRNA] (ISOFORM 2)</scope>
    <source>
        <tissue>Placenta</tissue>
    </source>
</reference>
<reference key="10">
    <citation type="submission" date="2003-01" db="EMBL/GenBank/DDBJ databases">
        <title>PPAR-delta 5'-complete cDNA fragment.</title>
        <authorList>
            <person name="Aoto T."/>
            <person name="Ishizuka M."/>
            <person name="Kazusaka A."/>
            <person name="Fujita S."/>
        </authorList>
    </citation>
    <scope>NUCLEOTIDE SEQUENCE OF 1-161</scope>
</reference>
<reference key="11">
    <citation type="journal article" date="2005" name="J. Lipid Res.">
        <title>Reduced cholesterol absorption upon PPARdelta activation coincides with decreased intestinal expression of NPC1L1.</title>
        <authorList>
            <person name="van der Veen J.N."/>
            <person name="Kruit J.K."/>
            <person name="Havinga R."/>
            <person name="Baller J.F.W."/>
            <person name="Chimini G."/>
            <person name="Lestavel S."/>
            <person name="Staels B."/>
            <person name="Groot P.H.E."/>
            <person name="Groen A.K."/>
            <person name="Kuipers F."/>
        </authorList>
    </citation>
    <scope>FUNCTION IN NPC1L1 EXPRESSION</scope>
</reference>
<reference key="12">
    <citation type="journal article" date="2022" name="Cell Metab.">
        <title>Deubiquitinase OTUD3 regulates metabolism homeostasis in response to nutritional stresses.</title>
        <authorList>
            <person name="Zhou N."/>
            <person name="Qi H."/>
            <person name="Liu J."/>
            <person name="Zhang G."/>
            <person name="Liu J."/>
            <person name="Liu N."/>
            <person name="Zhu M."/>
            <person name="Zhao X."/>
            <person name="Song C."/>
            <person name="Zhou Z."/>
            <person name="Gong J."/>
            <person name="Li R."/>
            <person name="Bai X."/>
            <person name="Jin Y."/>
            <person name="Song Y."/>
            <person name="Yin Y."/>
        </authorList>
    </citation>
    <scope>FUNCTION</scope>
    <scope>SUBCELLULAR LOCATION</scope>
    <scope>UBIQUITINATION</scope>
</reference>
<reference key="13">
    <citation type="journal article" date="1999" name="Mol. Cell">
        <title>Molecular recognition of fatty acids by peroxisome proliferator-activated receptors.</title>
        <authorList>
            <person name="Xu H.E."/>
            <person name="Lambert M.H."/>
            <person name="Montana V.G."/>
            <person name="Parks D.J."/>
            <person name="Blanchard S.G."/>
            <person name="Brown P.J."/>
            <person name="Sternbach D.D."/>
            <person name="Lehmann J.M."/>
            <person name="Wisely G.B."/>
            <person name="Willson T.M."/>
            <person name="Kliewer S.A."/>
            <person name="Milburn M.V."/>
        </authorList>
    </citation>
    <scope>X-RAY CRYSTALLOGRAPHY (2.5 ANGSTROMS) OF 171-441 IN COMPLEXES WITH EICOSAPENTAENOIC ACID AND THE SYNTHETIC AGONIST GW2433</scope>
    <scope>UNSATURATED FATTY ACID BINDING</scope>
</reference>
<reference key="14">
    <citation type="journal article" date="2000" name="Mol. Endocrinol.">
        <title>Alteration of a single amino acid in peroxisome proliferator-activated receptor-alpha (PPAR alpha) generates a PPAR delta phenotype.</title>
        <authorList>
            <person name="Takada I."/>
            <person name="Yu R.T."/>
            <person name="Xu H.E."/>
            <person name="Lambert M.H."/>
            <person name="Montana V.G."/>
            <person name="Kliewer S.A."/>
            <person name="Evans R.M."/>
            <person name="Umesono K."/>
        </authorList>
    </citation>
    <scope>X-RAY CRYSTALLOGRAPHY (2.65 ANGSTROMS) OF 170-441 IN COMPLEX WITH THE SYNTHETIC AGONIST GW2331</scope>
</reference>
<reference key="15">
    <citation type="journal article" date="2006" name="Bioorg. Med. Chem. Lett.">
        <title>3,4,5-trisubstituted isoxazoles as novel PPARdelta agonists. Part 2.</title>
        <authorList>
            <person name="Epple R."/>
            <person name="Azimioara M."/>
            <person name="Russo R."/>
            <person name="Xie Y."/>
            <person name="Wang X."/>
            <person name="Cow C."/>
            <person name="Wityak J."/>
            <person name="Karanewsky D."/>
            <person name="Bursulaya B."/>
            <person name="Kreusch A."/>
            <person name="Tuntland T."/>
            <person name="Gerken A."/>
            <person name="Iskandar M."/>
            <person name="Saez E."/>
            <person name="Martin Seidel H."/>
            <person name="Tian S.-S."/>
        </authorList>
    </citation>
    <scope>X-RAY CRYSTALLOGRAPHY (2.8 ANGSTROMS) OF 165-441 IN COMPLEX WITH SYNTHETIC AGONIST</scope>
</reference>
<reference key="16">
    <citation type="journal article" date="2006" name="J. Mol. Biol.">
        <title>Recombinant human PPAR-beta/delta ligand-binding domain is locked in an activated conformation by endogenous fatty acids.</title>
        <authorList>
            <person name="Fyffe S.A."/>
            <person name="Alphey M.S."/>
            <person name="Buetow L."/>
            <person name="Smith T.K."/>
            <person name="Ferguson M.A."/>
            <person name="Soerensen M.D."/>
            <person name="Bjoerkling F."/>
            <person name="Hunter W.N."/>
        </authorList>
    </citation>
    <scope>X-RAY CRYSTALLOGRAPHY (2.0 ANGSTROMS) OF 169-440 IN COMPLEX WITH FATTY ACIDS</scope>
</reference>
<reference key="17">
    <citation type="journal article" date="2006" name="Mol. Cell">
        <title>Reevaluation of the PPAR-beta/delta ligand binding domain model reveals why it exhibits the activated form.</title>
        <authorList>
            <person name="Fyffe S.A."/>
            <person name="Alphey M.S."/>
            <person name="Buetow L."/>
            <person name="Smith T.K."/>
            <person name="Ferguson M.A."/>
            <person name="Soerensen M.D."/>
            <person name="Bjoerkling F."/>
            <person name="Hunter W.N."/>
        </authorList>
    </citation>
    <scope>X-RAY CRYSTALLOGRAPHY (2.3 ANGSTROMS) OF 175-441</scope>
</reference>
<reference key="18">
    <citation type="journal article" date="2007" name="Bioorg. Med. Chem. Lett.">
        <title>Design of a partial PPARdelta agonist.</title>
        <authorList>
            <person name="Pettersson I."/>
            <person name="Ebdrup S."/>
            <person name="Havranek M."/>
            <person name="Pihera P."/>
            <person name="Korinek M."/>
            <person name="Mogensen J.P."/>
            <person name="Jeppesen C.B."/>
            <person name="Johansson E."/>
            <person name="Sauerberg P."/>
        </authorList>
    </citation>
    <scope>X-RAY CRYSTALLOGRAPHY (2.7 ANGSTROMS) OF 165-441 IN COMPLEX WITH SYNTHETIC AGONIST</scope>
</reference>
<reference key="19">
    <citation type="journal article" date="2008" name="Bioorg. Med. Chem. Lett.">
        <title>Discovery of a novel class of PPARdelta partial agonists.</title>
        <authorList>
            <person name="Shearer B.G."/>
            <person name="Patel H.S."/>
            <person name="Billin A.N."/>
            <person name="Way J.M."/>
            <person name="Winegar D.A."/>
            <person name="Lambert M.H."/>
            <person name="Xu R.X."/>
            <person name="Leesnitzer L.M."/>
            <person name="Merrihew R.V."/>
            <person name="Huet S."/>
            <person name="Willson T.M."/>
        </authorList>
    </citation>
    <scope>X-RAY CRYSTALLOGRAPHY (2.9 ANGSTROMS) OF 171-441</scope>
</reference>
<reference key="20">
    <citation type="journal article" date="2009" name="Acta Crystallogr. D">
        <title>Adaptability and selectivity of human peroxisome proliferator-activated receptor (PPAR) pan agonists revealed from crystal structures.</title>
        <authorList>
            <person name="Oyama T."/>
            <person name="Toyota K."/>
            <person name="Waku T."/>
            <person name="Hirakawa Y."/>
            <person name="Nagasawa N."/>
            <person name="Kasuga J.I."/>
            <person name="Hashimoto Y."/>
            <person name="Miyachi H."/>
            <person name="Morikawa K."/>
        </authorList>
    </citation>
    <scope>X-RAY CRYSTALLOGRAPHY (2.65 ANGSTROMS) OF 170-441 IN COMPLEXES WITH THE SYNTHETIC AGONISTS TIPP-401 AND TIPP-204</scope>
</reference>
<reference key="21">
    <citation type="journal article" date="2009" name="Bioorg. Med. Chem. Lett.">
        <title>Identification of a PPARdelta agonist with partial agonistic activity on PPARgamma.</title>
        <authorList>
            <person name="Connors R.V."/>
            <person name="Wang Z."/>
            <person name="Harrison M."/>
            <person name="Zhang A."/>
            <person name="Wanska M."/>
            <person name="Hiscock S."/>
            <person name="Fox B."/>
            <person name="Dore M."/>
            <person name="Labelle M."/>
            <person name="Sudom A."/>
            <person name="Johnstone S."/>
            <person name="Liu J."/>
            <person name="Walker N.P."/>
            <person name="Chai A."/>
            <person name="Siegler K."/>
            <person name="Li Y."/>
            <person name="Coward P."/>
        </authorList>
    </citation>
    <scope>X-RAY CRYSTALLOGRAPHY (2.0 ANGSTROMS) OF 171-439 IN COMPLEX WITH SYNTHETIC AGONIST</scope>
</reference>
<reference key="22">
    <citation type="journal article" date="2009" name="Proc. Natl. Acad. Sci. U.S.A.">
        <title>Scaffold-based discovery of indeglitazar, a PPAR pan-active anti-diabetic agent.</title>
        <authorList>
            <person name="Artis D.R."/>
            <person name="Lin J.J."/>
            <person name="Zhang C."/>
            <person name="Wang W."/>
            <person name="Mehra U."/>
            <person name="Perreault M."/>
            <person name="Erbe D."/>
            <person name="Krupka H.I."/>
            <person name="England B.P."/>
            <person name="Arnold J."/>
            <person name="Plotnikov A.N."/>
            <person name="Marimuthu A."/>
            <person name="Nguyen H."/>
            <person name="Will S."/>
            <person name="Signaevsky M."/>
            <person name="Kral J."/>
            <person name="Cantwell J."/>
            <person name="Settachatgull C."/>
            <person name="Yan D.S."/>
            <person name="Fong D."/>
            <person name="Oh A."/>
            <person name="Shi S."/>
            <person name="Womack P."/>
            <person name="Powell B."/>
            <person name="Habets G."/>
            <person name="West B.L."/>
            <person name="Zhang K.Y.J."/>
            <person name="Milburn M.V."/>
            <person name="Vlasuk G.P."/>
            <person name="Hirth K.P."/>
            <person name="Nolop K."/>
            <person name="Bollag G."/>
            <person name="Ibrahim P.N."/>
            <person name="Tobin J.F."/>
        </authorList>
    </citation>
    <scope>X-RAY CRYSTALLOGRAPHY (2.24 ANGSTROMS) OF 165-441 IN COMPLEX WITH INDEGLITAZAR</scope>
</reference>
<reference key="23">
    <citation type="submission" date="2008-04" db="PDB data bank">
        <title>Solution structure of the C4-type zinc finger domain from human peroxisome proliferator-activated receptor delta.</title>
        <authorList>
            <consortium name="RIKEN structural genomics initiative (RSGI)"/>
        </authorList>
    </citation>
    <scope>STRUCTURE BY NMR OF 66-151</scope>
</reference>
<evidence type="ECO:0000250" key="1">
    <source>
        <dbReference type="UniProtKB" id="P35396"/>
    </source>
</evidence>
<evidence type="ECO:0000255" key="2">
    <source>
        <dbReference type="PROSITE-ProRule" id="PRU00407"/>
    </source>
</evidence>
<evidence type="ECO:0000255" key="3">
    <source>
        <dbReference type="PROSITE-ProRule" id="PRU01189"/>
    </source>
</evidence>
<evidence type="ECO:0000256" key="4">
    <source>
        <dbReference type="SAM" id="MobiDB-lite"/>
    </source>
</evidence>
<evidence type="ECO:0000269" key="5">
    <source>
    </source>
</evidence>
<evidence type="ECO:0000269" key="6">
    <source>
    </source>
</evidence>
<evidence type="ECO:0000269" key="7">
    <source>
    </source>
</evidence>
<evidence type="ECO:0000269" key="8">
    <source>
    </source>
</evidence>
<evidence type="ECO:0000269" key="9">
    <source>
    </source>
</evidence>
<evidence type="ECO:0000269" key="10">
    <source>
    </source>
</evidence>
<evidence type="ECO:0000269" key="11">
    <source>
    </source>
</evidence>
<evidence type="ECO:0000269" key="12">
    <source>
    </source>
</evidence>
<evidence type="ECO:0000269" key="13">
    <source>
    </source>
</evidence>
<evidence type="ECO:0000303" key="14">
    <source>
    </source>
</evidence>
<evidence type="ECO:0000303" key="15">
    <source>
    </source>
</evidence>
<evidence type="ECO:0000305" key="16"/>
<evidence type="ECO:0000312" key="17">
    <source>
        <dbReference type="HGNC" id="HGNC:9235"/>
    </source>
</evidence>
<evidence type="ECO:0007829" key="18">
    <source>
        <dbReference type="PDB" id="1GWX"/>
    </source>
</evidence>
<evidence type="ECO:0007829" key="19">
    <source>
        <dbReference type="PDB" id="2B50"/>
    </source>
</evidence>
<evidence type="ECO:0007829" key="20">
    <source>
        <dbReference type="PDB" id="2ENV"/>
    </source>
</evidence>
<evidence type="ECO:0007829" key="21">
    <source>
        <dbReference type="PDB" id="2GWX"/>
    </source>
</evidence>
<evidence type="ECO:0007829" key="22">
    <source>
        <dbReference type="PDB" id="2ZNQ"/>
    </source>
</evidence>
<evidence type="ECO:0007829" key="23">
    <source>
        <dbReference type="PDB" id="3TKM"/>
    </source>
</evidence>
<evidence type="ECO:0007829" key="24">
    <source>
        <dbReference type="PDB" id="5U3Q"/>
    </source>
</evidence>
<evidence type="ECO:0007829" key="25">
    <source>
        <dbReference type="PDB" id="7F80"/>
    </source>
</evidence>
<gene>
    <name evidence="17" type="primary">PPARD</name>
    <name type="synonym">NR1C2</name>
    <name type="synonym">PPARB</name>
</gene>
<sequence>MEQPQEEAPEVREEEEKEEVAEAEGAPELNGGPQHALPSSSYTDLSRSSSPPSLLDQLQMGCDGASCGSLNMECRVCGDKASGFHYGVHACEGCKGFFRRTIRMKLEYEKCERSCKIQKKNRNKCQYCRFQKCLALGMSHNAIRFGRMPEAEKRKLVAGLTANEGSQYNPQVADLKAFSKHIYNAYLKNFNMTKKKARSILTGKASHTAPFVIHDIETLWQAEKGLVWKQLVNGLPPYKEISVHVFYRCQCTTVETVRELTEFAKSIPSFSSLFLNDQVTLLKYGVHEAIFAMLASIVNKDGLLVANGSGFVTREFLRSLRKPFSDIIEPKFEFAVKFNALELDDSDLALFIAAIILCGDRPGLMNVPRVEAIQDTILRALEFHLQANHPDAQYLFPKLLQKMADLRQLVTEHAQMMQRIKKTETETSLHPLLQEIYKDMY</sequence>